<evidence type="ECO:0000250" key="1">
    <source>
        <dbReference type="UniProtKB" id="Q91ZP3"/>
    </source>
</evidence>
<evidence type="ECO:0000255" key="2"/>
<evidence type="ECO:0000256" key="3">
    <source>
        <dbReference type="SAM" id="MobiDB-lite"/>
    </source>
</evidence>
<evidence type="ECO:0000269" key="4">
    <source>
    </source>
</evidence>
<evidence type="ECO:0000269" key="5">
    <source>
    </source>
</evidence>
<evidence type="ECO:0000269" key="6">
    <source>
    </source>
</evidence>
<evidence type="ECO:0000269" key="7">
    <source>
    </source>
</evidence>
<evidence type="ECO:0000269" key="8">
    <source>
    </source>
</evidence>
<evidence type="ECO:0000269" key="9">
    <source>
    </source>
</evidence>
<evidence type="ECO:0000269" key="10">
    <source>
    </source>
</evidence>
<evidence type="ECO:0000269" key="11">
    <source>
    </source>
</evidence>
<evidence type="ECO:0000269" key="12">
    <source>
    </source>
</evidence>
<evidence type="ECO:0000269" key="13">
    <source>
    </source>
</evidence>
<evidence type="ECO:0000269" key="14">
    <source>
    </source>
</evidence>
<evidence type="ECO:0000269" key="15">
    <source>
    </source>
</evidence>
<evidence type="ECO:0000303" key="16">
    <source>
    </source>
</evidence>
<evidence type="ECO:0000303" key="17">
    <source>
    </source>
</evidence>
<evidence type="ECO:0000305" key="18"/>
<evidence type="ECO:0000305" key="19">
    <source>
    </source>
</evidence>
<evidence type="ECO:0000305" key="20">
    <source>
    </source>
</evidence>
<evidence type="ECO:0000305" key="21">
    <source>
    </source>
</evidence>
<evidence type="ECO:0000312" key="22">
    <source>
        <dbReference type="HGNC" id="HGNC:13345"/>
    </source>
</evidence>
<protein>
    <recommendedName>
        <fullName evidence="18">Phosphatidate phosphatase LPIN1</fullName>
        <ecNumber evidence="9 11 12 15">3.1.3.4</ecNumber>
    </recommendedName>
    <alternativeName>
        <fullName evidence="1">Lipin-1</fullName>
    </alternativeName>
</protein>
<proteinExistence type="evidence at protein level"/>
<dbReference type="EC" id="3.1.3.4" evidence="9 11 12 15"/>
<dbReference type="EMBL" id="D80010">
    <property type="protein sequence ID" value="BAA11505.1"/>
    <property type="status" value="ALT_INIT"/>
    <property type="molecule type" value="mRNA"/>
</dbReference>
<dbReference type="EMBL" id="AK290235">
    <property type="protein sequence ID" value="BAF82924.1"/>
    <property type="molecule type" value="mRNA"/>
</dbReference>
<dbReference type="EMBL" id="AK293787">
    <property type="protein sequence ID" value="BAG57200.1"/>
    <property type="status" value="ALT_INIT"/>
    <property type="molecule type" value="mRNA"/>
</dbReference>
<dbReference type="EMBL" id="AK294742">
    <property type="protein sequence ID" value="BAG57885.1"/>
    <property type="status" value="ALT_INIT"/>
    <property type="molecule type" value="mRNA"/>
</dbReference>
<dbReference type="EMBL" id="AK294853">
    <property type="protein sequence ID" value="BAG57957.1"/>
    <property type="status" value="ALT_INIT"/>
    <property type="molecule type" value="mRNA"/>
</dbReference>
<dbReference type="EMBL" id="AK302922">
    <property type="protein sequence ID" value="BAH13844.1"/>
    <property type="molecule type" value="mRNA"/>
</dbReference>
<dbReference type="EMBL" id="AC012456">
    <property type="protein sequence ID" value="AAY14695.1"/>
    <property type="molecule type" value="Genomic_DNA"/>
</dbReference>
<dbReference type="EMBL" id="AC106875">
    <property type="status" value="NOT_ANNOTATED_CDS"/>
    <property type="molecule type" value="Genomic_DNA"/>
</dbReference>
<dbReference type="EMBL" id="CH471053">
    <property type="protein sequence ID" value="EAX00918.1"/>
    <property type="molecule type" value="Genomic_DNA"/>
</dbReference>
<dbReference type="EMBL" id="CH471053">
    <property type="protein sequence ID" value="EAX00920.1"/>
    <property type="molecule type" value="Genomic_DNA"/>
</dbReference>
<dbReference type="EMBL" id="BC018071">
    <property type="status" value="NOT_ANNOTATED_CDS"/>
    <property type="molecule type" value="mRNA"/>
</dbReference>
<dbReference type="EMBL" id="BC030537">
    <property type="protein sequence ID" value="AAH30537.1"/>
    <property type="molecule type" value="mRNA"/>
</dbReference>
<dbReference type="CCDS" id="CCDS1682.1">
    <molecule id="Q14693-1"/>
</dbReference>
<dbReference type="CCDS" id="CCDS58699.1">
    <molecule id="Q14693-7"/>
</dbReference>
<dbReference type="CCDS" id="CCDS58701.1">
    <molecule id="Q14693-2"/>
</dbReference>
<dbReference type="CCDS" id="CCDS92716.1">
    <molecule id="Q14693-3"/>
</dbReference>
<dbReference type="RefSeq" id="NP_001248356.1">
    <molecule id="Q14693-2"/>
    <property type="nucleotide sequence ID" value="NM_001261427.3"/>
</dbReference>
<dbReference type="RefSeq" id="NP_001248357.1">
    <molecule id="Q14693-7"/>
    <property type="nucleotide sequence ID" value="NM_001261428.3"/>
</dbReference>
<dbReference type="RefSeq" id="NP_001248358.1">
    <property type="nucleotide sequence ID" value="NM_001261429.1"/>
</dbReference>
<dbReference type="RefSeq" id="NP_001336128.1">
    <molecule id="Q14693-1"/>
    <property type="nucleotide sequence ID" value="NM_001349199.2"/>
</dbReference>
<dbReference type="RefSeq" id="NP_001336129.1">
    <molecule id="Q14693-4"/>
    <property type="nucleotide sequence ID" value="NM_001349200.2"/>
</dbReference>
<dbReference type="RefSeq" id="NP_001336130.1">
    <molecule id="Q14693-4"/>
    <property type="nucleotide sequence ID" value="NM_001349201.2"/>
</dbReference>
<dbReference type="RefSeq" id="NP_001336133.1">
    <molecule id="Q14693-3"/>
    <property type="nucleotide sequence ID" value="NM_001349204.2"/>
</dbReference>
<dbReference type="RefSeq" id="NP_001336134.1">
    <molecule id="Q14693-3"/>
    <property type="nucleotide sequence ID" value="NM_001349205.2"/>
</dbReference>
<dbReference type="RefSeq" id="NP_001336135.1">
    <molecule id="Q14693-3"/>
    <property type="nucleotide sequence ID" value="NM_001349206.2"/>
</dbReference>
<dbReference type="RefSeq" id="NP_663731.1">
    <molecule id="Q14693-1"/>
    <property type="nucleotide sequence ID" value="NM_145693.4"/>
</dbReference>
<dbReference type="RefSeq" id="XP_006711933.1">
    <property type="nucleotide sequence ID" value="XM_006711870.3"/>
</dbReference>
<dbReference type="RefSeq" id="XP_006711934.1">
    <property type="nucleotide sequence ID" value="XM_006711871.2"/>
</dbReference>
<dbReference type="RefSeq" id="XP_006711935.1">
    <property type="nucleotide sequence ID" value="XM_006711872.2"/>
</dbReference>
<dbReference type="RefSeq" id="XP_006711937.1">
    <property type="nucleotide sequence ID" value="XM_006711874.2"/>
</dbReference>
<dbReference type="RefSeq" id="XP_011508636.1">
    <property type="nucleotide sequence ID" value="XM_011510334.2"/>
</dbReference>
<dbReference type="RefSeq" id="XP_011508637.1">
    <property type="nucleotide sequence ID" value="XM_011510335.2"/>
</dbReference>
<dbReference type="RefSeq" id="XP_011508638.1">
    <property type="nucleotide sequence ID" value="XM_011510336.2"/>
</dbReference>
<dbReference type="RefSeq" id="XP_016859113.1">
    <property type="nucleotide sequence ID" value="XM_017003624.1"/>
</dbReference>
<dbReference type="RefSeq" id="XP_016859114.1">
    <property type="nucleotide sequence ID" value="XM_017003625.1"/>
</dbReference>
<dbReference type="RefSeq" id="XP_016859117.1">
    <property type="nucleotide sequence ID" value="XM_017003628.1"/>
</dbReference>
<dbReference type="RefSeq" id="XP_016859118.1">
    <property type="nucleotide sequence ID" value="XM_017003629.1"/>
</dbReference>
<dbReference type="RefSeq" id="XP_016859119.1">
    <property type="nucleotide sequence ID" value="XM_017003630.1"/>
</dbReference>
<dbReference type="SMR" id="Q14693"/>
<dbReference type="BioGRID" id="116787">
    <property type="interactions" value="34"/>
</dbReference>
<dbReference type="CORUM" id="Q14693"/>
<dbReference type="FunCoup" id="Q14693">
    <property type="interactions" value="2665"/>
</dbReference>
<dbReference type="IntAct" id="Q14693">
    <property type="interactions" value="31"/>
</dbReference>
<dbReference type="STRING" id="9606.ENSP00000397908"/>
<dbReference type="SwissLipids" id="SLP:000000881">
    <molecule id="Q14693-1"/>
</dbReference>
<dbReference type="SwissLipids" id="SLP:000000882">
    <molecule id="Q14693-3"/>
</dbReference>
<dbReference type="SwissLipids" id="SLP:000000883">
    <molecule id="Q14693-4"/>
</dbReference>
<dbReference type="DEPOD" id="LPIN1"/>
<dbReference type="GlyGen" id="Q14693">
    <property type="glycosylation" value="1 site"/>
</dbReference>
<dbReference type="iPTMnet" id="Q14693"/>
<dbReference type="PhosphoSitePlus" id="Q14693"/>
<dbReference type="BioMuta" id="LPIN1"/>
<dbReference type="DMDM" id="23831266"/>
<dbReference type="jPOST" id="Q14693"/>
<dbReference type="MassIVE" id="Q14693"/>
<dbReference type="PaxDb" id="9606-ENSP00000397908"/>
<dbReference type="PeptideAtlas" id="Q14693"/>
<dbReference type="ProteomicsDB" id="15159"/>
<dbReference type="ProteomicsDB" id="17975"/>
<dbReference type="ProteomicsDB" id="2078"/>
<dbReference type="ProteomicsDB" id="24603"/>
<dbReference type="ProteomicsDB" id="3982"/>
<dbReference type="ProteomicsDB" id="4174"/>
<dbReference type="ProteomicsDB" id="60131">
    <molecule id="Q14693-1"/>
</dbReference>
<dbReference type="Pumba" id="Q14693"/>
<dbReference type="Antibodypedia" id="26865">
    <property type="antibodies" value="484 antibodies from 37 providers"/>
</dbReference>
<dbReference type="DNASU" id="23175"/>
<dbReference type="Ensembl" id="ENST00000256720.6">
    <molecule id="Q14693-1"/>
    <property type="protein sequence ID" value="ENSP00000256720.2"/>
    <property type="gene ID" value="ENSG00000134324.12"/>
</dbReference>
<dbReference type="Ensembl" id="ENST00000396097.5">
    <molecule id="Q14693-5"/>
    <property type="protein sequence ID" value="ENSP00000379404.2"/>
    <property type="gene ID" value="ENSG00000134324.12"/>
</dbReference>
<dbReference type="Ensembl" id="ENST00000396098.5">
    <molecule id="Q14693-6"/>
    <property type="protein sequence ID" value="ENSP00000379405.1"/>
    <property type="gene ID" value="ENSG00000134324.12"/>
</dbReference>
<dbReference type="Ensembl" id="ENST00000425416.6">
    <molecule id="Q14693-2"/>
    <property type="protein sequence ID" value="ENSP00000401522.2"/>
    <property type="gene ID" value="ENSG00000134324.12"/>
</dbReference>
<dbReference type="Ensembl" id="ENST00000449576.6">
    <molecule id="Q14693-7"/>
    <property type="protein sequence ID" value="ENSP00000397908.2"/>
    <property type="gene ID" value="ENSG00000134324.12"/>
</dbReference>
<dbReference type="Ensembl" id="ENST00000674199.1">
    <molecule id="Q14693-3"/>
    <property type="protein sequence ID" value="ENSP00000501331.1"/>
    <property type="gene ID" value="ENSG00000134324.12"/>
</dbReference>
<dbReference type="GeneID" id="23175"/>
<dbReference type="KEGG" id="hsa:23175"/>
<dbReference type="MANE-Select" id="ENST00000674199.1">
    <molecule id="Q14693-3"/>
    <property type="protein sequence ID" value="ENSP00000501331.1"/>
    <property type="RefSeq nucleotide sequence ID" value="NM_001349206.2"/>
    <property type="RefSeq protein sequence ID" value="NP_001336135.1"/>
</dbReference>
<dbReference type="UCSC" id="uc002rbs.5">
    <molecule id="Q14693-1"/>
    <property type="organism name" value="human"/>
</dbReference>
<dbReference type="AGR" id="HGNC:13345"/>
<dbReference type="CTD" id="23175"/>
<dbReference type="DisGeNET" id="23175"/>
<dbReference type="GeneCards" id="LPIN1"/>
<dbReference type="HGNC" id="HGNC:13345">
    <property type="gene designation" value="LPIN1"/>
</dbReference>
<dbReference type="HPA" id="ENSG00000134324">
    <property type="expression patterns" value="Tissue enhanced (skeletal muscle, tongue)"/>
</dbReference>
<dbReference type="MalaCards" id="LPIN1"/>
<dbReference type="MIM" id="268200">
    <property type="type" value="phenotype"/>
</dbReference>
<dbReference type="MIM" id="605518">
    <property type="type" value="gene"/>
</dbReference>
<dbReference type="neXtProt" id="NX_Q14693"/>
<dbReference type="OpenTargets" id="ENSG00000134324"/>
<dbReference type="Orphanet" id="99845">
    <property type="disease" value="Genetic recurrent myoglobinuria"/>
</dbReference>
<dbReference type="PharmGKB" id="PA30436"/>
<dbReference type="VEuPathDB" id="HostDB:ENSG00000134324"/>
<dbReference type="eggNOG" id="KOG2116">
    <property type="taxonomic scope" value="Eukaryota"/>
</dbReference>
<dbReference type="GeneTree" id="ENSGT00940000157219"/>
<dbReference type="HOGENOM" id="CLU_595738_0_0_1"/>
<dbReference type="InParanoid" id="Q14693"/>
<dbReference type="OMA" id="XIKHESS"/>
<dbReference type="OrthoDB" id="4567at2759"/>
<dbReference type="PAN-GO" id="Q14693">
    <property type="GO annotations" value="8 GO annotations based on evolutionary models"/>
</dbReference>
<dbReference type="PhylomeDB" id="Q14693"/>
<dbReference type="TreeFam" id="TF314095"/>
<dbReference type="BRENDA" id="3.1.3.4">
    <property type="organism ID" value="2681"/>
</dbReference>
<dbReference type="PathwayCommons" id="Q14693"/>
<dbReference type="Reactome" id="R-HSA-1483191">
    <property type="pathway name" value="Synthesis of PC"/>
</dbReference>
<dbReference type="Reactome" id="R-HSA-1483213">
    <property type="pathway name" value="Synthesis of PE"/>
</dbReference>
<dbReference type="Reactome" id="R-HSA-4419969">
    <property type="pathway name" value="Depolymerization of the Nuclear Lamina"/>
</dbReference>
<dbReference type="Reactome" id="R-HSA-75109">
    <property type="pathway name" value="Triglyceride biosynthesis"/>
</dbReference>
<dbReference type="Reactome" id="R-HSA-9841922">
    <property type="pathway name" value="MLL4 and MLL3 complexes regulate expression of PPARG target genes in adipogenesis and hepatic steatosis"/>
</dbReference>
<dbReference type="SignaLink" id="Q14693"/>
<dbReference type="SIGNOR" id="Q14693"/>
<dbReference type="BioGRID-ORCS" id="23175">
    <property type="hits" value="19 hits in 1173 CRISPR screens"/>
</dbReference>
<dbReference type="ChiTaRS" id="LPIN1">
    <property type="organism name" value="human"/>
</dbReference>
<dbReference type="GeneWiki" id="LPIN1"/>
<dbReference type="GenomeRNAi" id="23175"/>
<dbReference type="Pharos" id="Q14693">
    <property type="development level" value="Tbio"/>
</dbReference>
<dbReference type="PRO" id="PR:Q14693"/>
<dbReference type="Proteomes" id="UP000005640">
    <property type="component" value="Chromosome 2"/>
</dbReference>
<dbReference type="RNAct" id="Q14693">
    <property type="molecule type" value="protein"/>
</dbReference>
<dbReference type="Bgee" id="ENSG00000134324">
    <property type="expression patterns" value="Expressed in sperm and 215 other cell types or tissues"/>
</dbReference>
<dbReference type="ExpressionAtlas" id="Q14693">
    <property type="expression patterns" value="baseline and differential"/>
</dbReference>
<dbReference type="GO" id="GO:0005737">
    <property type="term" value="C:cytoplasm"/>
    <property type="evidence" value="ECO:0000250"/>
    <property type="project" value="UniProtKB"/>
</dbReference>
<dbReference type="GO" id="GO:0005829">
    <property type="term" value="C:cytosol"/>
    <property type="evidence" value="ECO:0000314"/>
    <property type="project" value="UniProtKB"/>
</dbReference>
<dbReference type="GO" id="GO:0005783">
    <property type="term" value="C:endoplasmic reticulum"/>
    <property type="evidence" value="ECO:0000314"/>
    <property type="project" value="UniProtKB"/>
</dbReference>
<dbReference type="GO" id="GO:0005789">
    <property type="term" value="C:endoplasmic reticulum membrane"/>
    <property type="evidence" value="ECO:0000304"/>
    <property type="project" value="Reactome"/>
</dbReference>
<dbReference type="GO" id="GO:0005741">
    <property type="term" value="C:mitochondrial outer membrane"/>
    <property type="evidence" value="ECO:0000318"/>
    <property type="project" value="GO_Central"/>
</dbReference>
<dbReference type="GO" id="GO:0005635">
    <property type="term" value="C:nuclear envelope"/>
    <property type="evidence" value="ECO:0000304"/>
    <property type="project" value="Reactome"/>
</dbReference>
<dbReference type="GO" id="GO:0031965">
    <property type="term" value="C:nuclear membrane"/>
    <property type="evidence" value="ECO:0000250"/>
    <property type="project" value="UniProtKB"/>
</dbReference>
<dbReference type="GO" id="GO:0005654">
    <property type="term" value="C:nucleoplasm"/>
    <property type="evidence" value="ECO:0000304"/>
    <property type="project" value="Reactome"/>
</dbReference>
<dbReference type="GO" id="GO:0005634">
    <property type="term" value="C:nucleus"/>
    <property type="evidence" value="ECO:0000250"/>
    <property type="project" value="UniProtKB"/>
</dbReference>
<dbReference type="GO" id="GO:0008195">
    <property type="term" value="F:phosphatidate phosphatase activity"/>
    <property type="evidence" value="ECO:0000314"/>
    <property type="project" value="UniProtKB"/>
</dbReference>
<dbReference type="GO" id="GO:0003713">
    <property type="term" value="F:transcription coactivator activity"/>
    <property type="evidence" value="ECO:0000318"/>
    <property type="project" value="GO_Central"/>
</dbReference>
<dbReference type="GO" id="GO:0031100">
    <property type="term" value="P:animal organ regeneration"/>
    <property type="evidence" value="ECO:0007669"/>
    <property type="project" value="Ensembl"/>
</dbReference>
<dbReference type="GO" id="GO:0032869">
    <property type="term" value="P:cellular response to insulin stimulus"/>
    <property type="evidence" value="ECO:0000318"/>
    <property type="project" value="GO_Central"/>
</dbReference>
<dbReference type="GO" id="GO:0009062">
    <property type="term" value="P:fatty acid catabolic process"/>
    <property type="evidence" value="ECO:0000250"/>
    <property type="project" value="UniProtKB"/>
</dbReference>
<dbReference type="GO" id="GO:0007077">
    <property type="term" value="P:mitotic nuclear membrane disassembly"/>
    <property type="evidence" value="ECO:0000304"/>
    <property type="project" value="Reactome"/>
</dbReference>
<dbReference type="GO" id="GO:0031642">
    <property type="term" value="P:negative regulation of myelination"/>
    <property type="evidence" value="ECO:0007669"/>
    <property type="project" value="Ensembl"/>
</dbReference>
<dbReference type="GO" id="GO:1905694">
    <property type="term" value="P:negative regulation of phosphatidic acid biosynthetic process"/>
    <property type="evidence" value="ECO:0007669"/>
    <property type="project" value="Ensembl"/>
</dbReference>
<dbReference type="GO" id="GO:0046473">
    <property type="term" value="P:phosphatidic acid metabolic process"/>
    <property type="evidence" value="ECO:0000314"/>
    <property type="project" value="UniProtKB"/>
</dbReference>
<dbReference type="GO" id="GO:0046337">
    <property type="term" value="P:phosphatidylethanolamine metabolic process"/>
    <property type="evidence" value="ECO:0000314"/>
    <property type="project" value="UniProtKB"/>
</dbReference>
<dbReference type="GO" id="GO:0120162">
    <property type="term" value="P:positive regulation of cold-induced thermogenesis"/>
    <property type="evidence" value="ECO:0000250"/>
    <property type="project" value="YuBioLab"/>
</dbReference>
<dbReference type="GO" id="GO:0045944">
    <property type="term" value="P:positive regulation of transcription by RNA polymerase II"/>
    <property type="evidence" value="ECO:0000318"/>
    <property type="project" value="GO_Central"/>
</dbReference>
<dbReference type="GO" id="GO:0019432">
    <property type="term" value="P:triglyceride biosynthetic process"/>
    <property type="evidence" value="ECO:0000314"/>
    <property type="project" value="UniProtKB"/>
</dbReference>
<dbReference type="GO" id="GO:0006642">
    <property type="term" value="P:triglyceride mobilization"/>
    <property type="evidence" value="ECO:0000250"/>
    <property type="project" value="UniProtKB"/>
</dbReference>
<dbReference type="InterPro" id="IPR036412">
    <property type="entry name" value="HAD-like_sf"/>
</dbReference>
<dbReference type="InterPro" id="IPR026058">
    <property type="entry name" value="LIPIN"/>
</dbReference>
<dbReference type="InterPro" id="IPR031703">
    <property type="entry name" value="Lipin_mid"/>
</dbReference>
<dbReference type="InterPro" id="IPR007651">
    <property type="entry name" value="Lipin_N"/>
</dbReference>
<dbReference type="InterPro" id="IPR013209">
    <property type="entry name" value="LNS2"/>
</dbReference>
<dbReference type="InterPro" id="IPR031315">
    <property type="entry name" value="LNS2/PITP"/>
</dbReference>
<dbReference type="PANTHER" id="PTHR12181">
    <property type="entry name" value="LIPIN"/>
    <property type="match status" value="1"/>
</dbReference>
<dbReference type="PANTHER" id="PTHR12181:SF10">
    <property type="entry name" value="PHOSPHATIDATE PHOSPHATASE LPIN1"/>
    <property type="match status" value="1"/>
</dbReference>
<dbReference type="Pfam" id="PF16876">
    <property type="entry name" value="Lipin_mid"/>
    <property type="match status" value="1"/>
</dbReference>
<dbReference type="Pfam" id="PF04571">
    <property type="entry name" value="Lipin_N"/>
    <property type="match status" value="1"/>
</dbReference>
<dbReference type="Pfam" id="PF08235">
    <property type="entry name" value="LNS2"/>
    <property type="match status" value="1"/>
</dbReference>
<dbReference type="SMART" id="SM00775">
    <property type="entry name" value="LNS2"/>
    <property type="match status" value="1"/>
</dbReference>
<dbReference type="SUPFAM" id="SSF56784">
    <property type="entry name" value="HAD-like"/>
    <property type="match status" value="1"/>
</dbReference>
<comment type="function">
    <text evidence="1 9 11 12 13">Acts as a magnesium-dependent phosphatidate phosphatase enzyme which catalyzes the conversion of phosphatidic acid to diacylglycerol during triglyceride, phosphatidylcholine and phosphatidylethanolamine biosynthesis and therefore controls the metabolism of fatty acids at different levels (PubMed:20231281, PubMed:23426360, PubMed:29765047, PubMed:31695197). Is involved in adipocyte differentiation (By similarity). Recruited at the mitochondrion outer membrane and is involved in mitochondrial fission by converting phosphatidic acid to diacylglycerol (By similarity). Acts also as nuclear transcriptional coactivator for PPARGC1A/PPARA regulatory pathway to modulate lipid metabolism gene expression (By similarity).</text>
</comment>
<comment type="catalytic activity">
    <reaction evidence="9 11 12">
        <text>a 1,2-diacyl-sn-glycero-3-phosphate + H2O = a 1,2-diacyl-sn-glycerol + phosphate</text>
        <dbReference type="Rhea" id="RHEA:27429"/>
        <dbReference type="ChEBI" id="CHEBI:15377"/>
        <dbReference type="ChEBI" id="CHEBI:17815"/>
        <dbReference type="ChEBI" id="CHEBI:43474"/>
        <dbReference type="ChEBI" id="CHEBI:58608"/>
        <dbReference type="EC" id="3.1.3.4"/>
    </reaction>
    <physiologicalReaction direction="left-to-right" evidence="19 20 21">
        <dbReference type="Rhea" id="RHEA:27430"/>
    </physiologicalReaction>
</comment>
<comment type="catalytic activity">
    <molecule>Isoform 1</molecule>
    <reaction evidence="15">
        <text>a 1,2-diacyl-sn-glycero-3-phosphate + H2O = a 1,2-diacyl-sn-glycerol + phosphate</text>
        <dbReference type="Rhea" id="RHEA:27429"/>
        <dbReference type="ChEBI" id="CHEBI:15377"/>
        <dbReference type="ChEBI" id="CHEBI:17815"/>
        <dbReference type="ChEBI" id="CHEBI:43474"/>
        <dbReference type="ChEBI" id="CHEBI:58608"/>
        <dbReference type="EC" id="3.1.3.4"/>
    </reaction>
    <physiologicalReaction direction="left-to-right" evidence="15">
        <dbReference type="Rhea" id="RHEA:27430"/>
    </physiologicalReaction>
</comment>
<comment type="catalytic activity">
    <molecule>Isoform 1</molecule>
    <reaction evidence="9">
        <text>1-octadecanoyl-2-(4Z,7Z,10Z,13Z,16Z,19Z-docosahexaenoyl)-sn-glycero-3-phosphate + H2O = 1-octadecanoyl-2-(4Z,7Z,10Z,13Z,16Z,19Z-docosahexaenoyl)-sn-glycerol + phosphate</text>
        <dbReference type="Rhea" id="RHEA:43296"/>
        <dbReference type="ChEBI" id="CHEBI:15377"/>
        <dbReference type="ChEBI" id="CHEBI:43474"/>
        <dbReference type="ChEBI" id="CHEBI:77129"/>
        <dbReference type="ChEBI" id="CHEBI:77130"/>
    </reaction>
    <physiologicalReaction direction="left-to-right" evidence="19">
        <dbReference type="Rhea" id="RHEA:43297"/>
    </physiologicalReaction>
</comment>
<comment type="catalytic activity">
    <molecule>Isoform 1</molecule>
    <reaction evidence="9">
        <text>1-octadecanoyl-2-(5Z,8Z,11Z,14Z-eicosatetraenoyl)-sn-glycero-3-phosphate + H2O = 1-octadecanoyl-2-(5Z,8Z,11Z,14Z-eicosatetraenoyl)-sn-glycerol + phosphate</text>
        <dbReference type="Rhea" id="RHEA:43292"/>
        <dbReference type="ChEBI" id="CHEBI:15377"/>
        <dbReference type="ChEBI" id="CHEBI:43474"/>
        <dbReference type="ChEBI" id="CHEBI:75728"/>
        <dbReference type="ChEBI" id="CHEBI:77091"/>
    </reaction>
    <physiologicalReaction direction="left-to-right" evidence="19">
        <dbReference type="Rhea" id="RHEA:43293"/>
    </physiologicalReaction>
</comment>
<comment type="catalytic activity">
    <molecule>Isoform 1</molecule>
    <reaction evidence="9">
        <text>1-octadecanoyl-2-(9Z,12Z-octadecadienoyl)-sn-glycero-3-phosphate + H2O = 1-octadecanoyl-2-(9Z,12Z)-octadecadienoyl-sn-glycerol + phosphate</text>
        <dbReference type="Rhea" id="RHEA:43288"/>
        <dbReference type="ChEBI" id="CHEBI:15377"/>
        <dbReference type="ChEBI" id="CHEBI:43474"/>
        <dbReference type="ChEBI" id="CHEBI:77097"/>
        <dbReference type="ChEBI" id="CHEBI:77098"/>
    </reaction>
    <physiologicalReaction direction="left-to-right" evidence="19">
        <dbReference type="Rhea" id="RHEA:43289"/>
    </physiologicalReaction>
</comment>
<comment type="catalytic activity">
    <molecule>Isoform 1</molecule>
    <reaction evidence="9">
        <text>1-octadecanoyl-2-(9Z-octadecenoyl)-sn-glycero-3-phosphate + H2O = 1-octadecanoyl-2-(9Z-octadecenoyl)-sn-glycerol + phosphate</text>
        <dbReference type="Rhea" id="RHEA:43284"/>
        <dbReference type="ChEBI" id="CHEBI:15377"/>
        <dbReference type="ChEBI" id="CHEBI:43474"/>
        <dbReference type="ChEBI" id="CHEBI:74560"/>
        <dbReference type="ChEBI" id="CHEBI:75468"/>
    </reaction>
    <physiologicalReaction direction="left-to-right" evidence="19">
        <dbReference type="Rhea" id="RHEA:43285"/>
    </physiologicalReaction>
</comment>
<comment type="catalytic activity">
    <molecule>Isoform 1</molecule>
    <reaction evidence="9">
        <text>1-hexadecanoyl-2-(4Z,7Z,10Z,13Z,16Z,19Z-docosahexaenoyl)-sn-glycero-3-phosphate + H2O = 1-hexadecanoyl-2-(4Z,7Z,10Z,13Z,16Z,19Z-docosahexaenoyl)-sn-glycerol + phosphate</text>
        <dbReference type="Rhea" id="RHEA:43280"/>
        <dbReference type="ChEBI" id="CHEBI:15377"/>
        <dbReference type="ChEBI" id="CHEBI:43474"/>
        <dbReference type="ChEBI" id="CHEBI:82928"/>
        <dbReference type="ChEBI" id="CHEBI:82949"/>
    </reaction>
    <physiologicalReaction direction="left-to-right" evidence="19">
        <dbReference type="Rhea" id="RHEA:43281"/>
    </physiologicalReaction>
</comment>
<comment type="catalytic activity">
    <molecule>Isoform 1</molecule>
    <reaction evidence="9">
        <text>1,2-dioctadecanoyl-sn-glycero-3-phosphate + H2O = 1,2-dioctadecanoyl-sn-glycerol + phosphate</text>
        <dbReference type="Rhea" id="RHEA:33335"/>
        <dbReference type="ChEBI" id="CHEBI:15377"/>
        <dbReference type="ChEBI" id="CHEBI:41847"/>
        <dbReference type="ChEBI" id="CHEBI:43474"/>
        <dbReference type="ChEBI" id="CHEBI:82921"/>
    </reaction>
    <physiologicalReaction direction="left-to-right" evidence="19">
        <dbReference type="Rhea" id="RHEA:33336"/>
    </physiologicalReaction>
</comment>
<comment type="catalytic activity">
    <molecule>Isoform 1</molecule>
    <reaction evidence="9">
        <text>1-hexadecanoyl-2-(5Z,8Z,11Z,14Z-eicosatetraenoyl)-sn-glycero-3-phosphate + H2O = 1-hexadecanoyl-2-(5Z,8Z,11Z,14Z-eicosatetraenoyl)-sn-glycerol + phosphate</text>
        <dbReference type="Rhea" id="RHEA:43260"/>
        <dbReference type="ChEBI" id="CHEBI:15377"/>
        <dbReference type="ChEBI" id="CHEBI:43474"/>
        <dbReference type="ChEBI" id="CHEBI:72864"/>
        <dbReference type="ChEBI" id="CHEBI:77096"/>
    </reaction>
    <physiologicalReaction direction="left-to-right" evidence="19">
        <dbReference type="Rhea" id="RHEA:43261"/>
    </physiologicalReaction>
</comment>
<comment type="catalytic activity">
    <molecule>Isoform 1</molecule>
    <reaction evidence="9">
        <text>1-hexadecanoyl-2-(9Z,12Z-octadecadienoyl)-sn-glycero-3-phosphate + H2O = 1-hexadecanoyl-2-(9Z,12Z-octadecadienoyl)-sn-glycerol + phosphate</text>
        <dbReference type="Rhea" id="RHEA:43256"/>
        <dbReference type="ChEBI" id="CHEBI:15377"/>
        <dbReference type="ChEBI" id="CHEBI:43474"/>
        <dbReference type="ChEBI" id="CHEBI:72860"/>
        <dbReference type="ChEBI" id="CHEBI:82927"/>
    </reaction>
    <physiologicalReaction direction="left-to-right" evidence="19">
        <dbReference type="Rhea" id="RHEA:43257"/>
    </physiologicalReaction>
</comment>
<comment type="catalytic activity">
    <molecule>Isoform 1</molecule>
    <reaction evidence="9">
        <text>1-hexadecanoyl-2-(9Z-octadecenoyl)-sn-glycero-3-phosphate + H2O = 1-hexadecanoyl-2-(9Z-octadecenoyl)-sn-glycerol + phosphate</text>
        <dbReference type="Rhea" id="RHEA:41255"/>
        <dbReference type="ChEBI" id="CHEBI:15377"/>
        <dbReference type="ChEBI" id="CHEBI:43474"/>
        <dbReference type="ChEBI" id="CHEBI:64839"/>
        <dbReference type="ChEBI" id="CHEBI:75466"/>
    </reaction>
    <physiologicalReaction direction="left-to-right" evidence="19">
        <dbReference type="Rhea" id="RHEA:41256"/>
    </physiologicalReaction>
</comment>
<comment type="catalytic activity">
    <molecule>Isoform 1</molecule>
    <reaction evidence="9">
        <text>1,2-di-(4Z,7Z,10Z,13Z,16Z,19Z-docosahexaenoyl)-sn-glycero-3-phosphate + H2O = 1,2-di-(4Z,7Z,10Z,13Z,16Z,19Z-docosahexaenoyl)-sn-glycerol + phosphate</text>
        <dbReference type="Rhea" id="RHEA:43252"/>
        <dbReference type="ChEBI" id="CHEBI:15377"/>
        <dbReference type="ChEBI" id="CHEBI:43474"/>
        <dbReference type="ChEBI" id="CHEBI:82924"/>
        <dbReference type="ChEBI" id="CHEBI:82925"/>
    </reaction>
    <physiologicalReaction direction="left-to-right" evidence="19">
        <dbReference type="Rhea" id="RHEA:43253"/>
    </physiologicalReaction>
</comment>
<comment type="catalytic activity">
    <molecule>Isoform 1</molecule>
    <reaction evidence="9">
        <text>1,2-di-(5Z,8Z,11Z,14Z)-eicosatetraenoyl-sn-glycero-3-phosphate + H2O = 1,2-di-(5Z,8Z,11Z,14Z)-eicosatetraenoyl-sn-glycerol + phosphate</text>
        <dbReference type="Rhea" id="RHEA:43248"/>
        <dbReference type="ChEBI" id="CHEBI:15377"/>
        <dbReference type="ChEBI" id="CHEBI:43474"/>
        <dbReference type="ChEBI" id="CHEBI:77125"/>
        <dbReference type="ChEBI" id="CHEBI:77126"/>
    </reaction>
    <physiologicalReaction direction="left-to-right" evidence="19">
        <dbReference type="Rhea" id="RHEA:43249"/>
    </physiologicalReaction>
</comment>
<comment type="catalytic activity">
    <molecule>Isoform 1</molecule>
    <reaction evidence="9">
        <text>1,2-di-(9Z,12Z-octadecadienoyl)-sn-glycero-3-phosphate + H2O = 1,2-di-(9Z,12Z-octadecadienoyl)-sn-glycerol + phosphate</text>
        <dbReference type="Rhea" id="RHEA:43240"/>
        <dbReference type="ChEBI" id="CHEBI:15377"/>
        <dbReference type="ChEBI" id="CHEBI:43474"/>
        <dbReference type="ChEBI" id="CHEBI:77127"/>
        <dbReference type="ChEBI" id="CHEBI:77128"/>
    </reaction>
    <physiologicalReaction direction="left-to-right" evidence="19">
        <dbReference type="Rhea" id="RHEA:43241"/>
    </physiologicalReaction>
</comment>
<comment type="catalytic activity">
    <molecule>Isoform 1</molecule>
    <reaction evidence="9">
        <text>1,2-di-(9Z-octadecenoyl)-sn-glycero-3-phosphate + H2O = 1,2-di-(9Z-octadecenoyl)-sn-glycerol + phosphate</text>
        <dbReference type="Rhea" id="RHEA:43244"/>
        <dbReference type="ChEBI" id="CHEBI:15377"/>
        <dbReference type="ChEBI" id="CHEBI:43474"/>
        <dbReference type="ChEBI" id="CHEBI:52333"/>
        <dbReference type="ChEBI" id="CHEBI:74546"/>
    </reaction>
    <physiologicalReaction direction="left-to-right" evidence="19">
        <dbReference type="Rhea" id="RHEA:43245"/>
    </physiologicalReaction>
</comment>
<comment type="catalytic activity">
    <molecule>Isoform 1</molecule>
    <reaction evidence="9">
        <text>1,2-dihexadecanoyl-sn-glycero-3-phosphate + H2O = 1,2-dihexadecanoyl-sn-glycerol + phosphate</text>
        <dbReference type="Rhea" id="RHEA:43236"/>
        <dbReference type="ChEBI" id="CHEBI:15377"/>
        <dbReference type="ChEBI" id="CHEBI:43474"/>
        <dbReference type="ChEBI" id="CHEBI:72859"/>
        <dbReference type="ChEBI" id="CHEBI:82929"/>
    </reaction>
    <physiologicalReaction direction="left-to-right" evidence="19">
        <dbReference type="Rhea" id="RHEA:43237"/>
    </physiologicalReaction>
</comment>
<comment type="catalytic activity">
    <molecule>Isoform 3</molecule>
    <reaction evidence="15">
        <text>a 1,2-diacyl-sn-glycero-3-phosphate + H2O = a 1,2-diacyl-sn-glycerol + phosphate</text>
        <dbReference type="Rhea" id="RHEA:27429"/>
        <dbReference type="ChEBI" id="CHEBI:15377"/>
        <dbReference type="ChEBI" id="CHEBI:17815"/>
        <dbReference type="ChEBI" id="CHEBI:43474"/>
        <dbReference type="ChEBI" id="CHEBI:58608"/>
        <dbReference type="EC" id="3.1.3.4"/>
    </reaction>
    <physiologicalReaction direction="left-to-right" evidence="15">
        <dbReference type="Rhea" id="RHEA:27430"/>
    </physiologicalReaction>
</comment>
<comment type="catalytic activity">
    <molecule>Isoform 3</molecule>
    <reaction evidence="9">
        <text>1-octadecanoyl-2-(4Z,7Z,10Z,13Z,16Z,19Z-docosahexaenoyl)-sn-glycero-3-phosphate + H2O = 1-octadecanoyl-2-(4Z,7Z,10Z,13Z,16Z,19Z-docosahexaenoyl)-sn-glycerol + phosphate</text>
        <dbReference type="Rhea" id="RHEA:43296"/>
        <dbReference type="ChEBI" id="CHEBI:15377"/>
        <dbReference type="ChEBI" id="CHEBI:43474"/>
        <dbReference type="ChEBI" id="CHEBI:77129"/>
        <dbReference type="ChEBI" id="CHEBI:77130"/>
    </reaction>
    <physiologicalReaction direction="left-to-right" evidence="19">
        <dbReference type="Rhea" id="RHEA:43297"/>
    </physiologicalReaction>
</comment>
<comment type="catalytic activity">
    <molecule>Isoform 3</molecule>
    <reaction evidence="9">
        <text>1-octadecanoyl-2-(5Z,8Z,11Z,14Z-eicosatetraenoyl)-sn-glycero-3-phosphate + H2O = 1-octadecanoyl-2-(5Z,8Z,11Z,14Z-eicosatetraenoyl)-sn-glycerol + phosphate</text>
        <dbReference type="Rhea" id="RHEA:43292"/>
        <dbReference type="ChEBI" id="CHEBI:15377"/>
        <dbReference type="ChEBI" id="CHEBI:43474"/>
        <dbReference type="ChEBI" id="CHEBI:75728"/>
        <dbReference type="ChEBI" id="CHEBI:77091"/>
    </reaction>
    <physiologicalReaction direction="left-to-right" evidence="19">
        <dbReference type="Rhea" id="RHEA:43293"/>
    </physiologicalReaction>
</comment>
<comment type="catalytic activity">
    <molecule>Isoform 3</molecule>
    <reaction evidence="9">
        <text>1-octadecanoyl-2-(9Z,12Z-octadecadienoyl)-sn-glycero-3-phosphate + H2O = 1-octadecanoyl-2-(9Z,12Z)-octadecadienoyl-sn-glycerol + phosphate</text>
        <dbReference type="Rhea" id="RHEA:43288"/>
        <dbReference type="ChEBI" id="CHEBI:15377"/>
        <dbReference type="ChEBI" id="CHEBI:43474"/>
        <dbReference type="ChEBI" id="CHEBI:77097"/>
        <dbReference type="ChEBI" id="CHEBI:77098"/>
    </reaction>
    <physiologicalReaction direction="left-to-right" evidence="19">
        <dbReference type="Rhea" id="RHEA:43289"/>
    </physiologicalReaction>
</comment>
<comment type="catalytic activity">
    <molecule>Isoform 3</molecule>
    <reaction evidence="9">
        <text>1-octadecanoyl-2-(9Z-octadecenoyl)-sn-glycero-3-phosphate + H2O = 1-octadecanoyl-2-(9Z-octadecenoyl)-sn-glycerol + phosphate</text>
        <dbReference type="Rhea" id="RHEA:43284"/>
        <dbReference type="ChEBI" id="CHEBI:15377"/>
        <dbReference type="ChEBI" id="CHEBI:43474"/>
        <dbReference type="ChEBI" id="CHEBI:74560"/>
        <dbReference type="ChEBI" id="CHEBI:75468"/>
    </reaction>
    <physiologicalReaction direction="left-to-right" evidence="19">
        <dbReference type="Rhea" id="RHEA:43285"/>
    </physiologicalReaction>
</comment>
<comment type="catalytic activity">
    <molecule>Isoform 3</molecule>
    <reaction evidence="9">
        <text>1-hexadecanoyl-2-(4Z,7Z,10Z,13Z,16Z,19Z-docosahexaenoyl)-sn-glycero-3-phosphate + H2O = 1-hexadecanoyl-2-(4Z,7Z,10Z,13Z,16Z,19Z-docosahexaenoyl)-sn-glycerol + phosphate</text>
        <dbReference type="Rhea" id="RHEA:43280"/>
        <dbReference type="ChEBI" id="CHEBI:15377"/>
        <dbReference type="ChEBI" id="CHEBI:43474"/>
        <dbReference type="ChEBI" id="CHEBI:82928"/>
        <dbReference type="ChEBI" id="CHEBI:82949"/>
    </reaction>
    <physiologicalReaction direction="left-to-right" evidence="19">
        <dbReference type="Rhea" id="RHEA:43281"/>
    </physiologicalReaction>
</comment>
<comment type="catalytic activity">
    <molecule>Isoform 3</molecule>
    <reaction evidence="9">
        <text>1-hexadecanoyl-2-(5Z,8Z,11Z,14Z-eicosatetraenoyl)-sn-glycero-3-phosphate + H2O = 1-hexadecanoyl-2-(5Z,8Z,11Z,14Z-eicosatetraenoyl)-sn-glycerol + phosphate</text>
        <dbReference type="Rhea" id="RHEA:43260"/>
        <dbReference type="ChEBI" id="CHEBI:15377"/>
        <dbReference type="ChEBI" id="CHEBI:43474"/>
        <dbReference type="ChEBI" id="CHEBI:72864"/>
        <dbReference type="ChEBI" id="CHEBI:77096"/>
    </reaction>
    <physiologicalReaction direction="left-to-right" evidence="19">
        <dbReference type="Rhea" id="RHEA:43261"/>
    </physiologicalReaction>
</comment>
<comment type="catalytic activity">
    <molecule>Isoform 3</molecule>
    <reaction evidence="9">
        <text>1-hexadecanoyl-2-(9Z,12Z-octadecadienoyl)-sn-glycero-3-phosphate + H2O = 1-hexadecanoyl-2-(9Z,12Z-octadecadienoyl)-sn-glycerol + phosphate</text>
        <dbReference type="Rhea" id="RHEA:43256"/>
        <dbReference type="ChEBI" id="CHEBI:15377"/>
        <dbReference type="ChEBI" id="CHEBI:43474"/>
        <dbReference type="ChEBI" id="CHEBI:72860"/>
        <dbReference type="ChEBI" id="CHEBI:82927"/>
    </reaction>
    <physiologicalReaction direction="left-to-right" evidence="19">
        <dbReference type="Rhea" id="RHEA:43257"/>
    </physiologicalReaction>
</comment>
<comment type="catalytic activity">
    <molecule>Isoform 3</molecule>
    <reaction evidence="9">
        <text>1-hexadecanoyl-2-(9Z-octadecenoyl)-sn-glycero-3-phosphate + H2O = 1-hexadecanoyl-2-(9Z-octadecenoyl)-sn-glycerol + phosphate</text>
        <dbReference type="Rhea" id="RHEA:41255"/>
        <dbReference type="ChEBI" id="CHEBI:15377"/>
        <dbReference type="ChEBI" id="CHEBI:43474"/>
        <dbReference type="ChEBI" id="CHEBI:64839"/>
        <dbReference type="ChEBI" id="CHEBI:75466"/>
    </reaction>
    <physiologicalReaction direction="left-to-right" evidence="19">
        <dbReference type="Rhea" id="RHEA:41256"/>
    </physiologicalReaction>
</comment>
<comment type="catalytic activity">
    <molecule>Isoform 3</molecule>
    <reaction evidence="9">
        <text>1,2-di-(4Z,7Z,10Z,13Z,16Z,19Z-docosahexaenoyl)-sn-glycero-3-phosphate + H2O = 1,2-di-(4Z,7Z,10Z,13Z,16Z,19Z-docosahexaenoyl)-sn-glycerol + phosphate</text>
        <dbReference type="Rhea" id="RHEA:43252"/>
        <dbReference type="ChEBI" id="CHEBI:15377"/>
        <dbReference type="ChEBI" id="CHEBI:43474"/>
        <dbReference type="ChEBI" id="CHEBI:82924"/>
        <dbReference type="ChEBI" id="CHEBI:82925"/>
    </reaction>
    <physiologicalReaction direction="left-to-right" evidence="19">
        <dbReference type="Rhea" id="RHEA:43253"/>
    </physiologicalReaction>
</comment>
<comment type="catalytic activity">
    <molecule>Isoform 3</molecule>
    <reaction evidence="9">
        <text>1,2-di-(5Z,8Z,11Z,14Z)-eicosatetraenoyl-sn-glycero-3-phosphate + H2O = 1,2-di-(5Z,8Z,11Z,14Z)-eicosatetraenoyl-sn-glycerol + phosphate</text>
        <dbReference type="Rhea" id="RHEA:43248"/>
        <dbReference type="ChEBI" id="CHEBI:15377"/>
        <dbReference type="ChEBI" id="CHEBI:43474"/>
        <dbReference type="ChEBI" id="CHEBI:77125"/>
        <dbReference type="ChEBI" id="CHEBI:77126"/>
    </reaction>
    <physiologicalReaction direction="left-to-right" evidence="19">
        <dbReference type="Rhea" id="RHEA:43249"/>
    </physiologicalReaction>
</comment>
<comment type="catalytic activity">
    <molecule>Isoform 3</molecule>
    <reaction evidence="9">
        <text>1,2-di-(9Z,12Z-octadecadienoyl)-sn-glycero-3-phosphate + H2O = 1,2-di-(9Z,12Z-octadecadienoyl)-sn-glycerol + phosphate</text>
        <dbReference type="Rhea" id="RHEA:43240"/>
        <dbReference type="ChEBI" id="CHEBI:15377"/>
        <dbReference type="ChEBI" id="CHEBI:43474"/>
        <dbReference type="ChEBI" id="CHEBI:77127"/>
        <dbReference type="ChEBI" id="CHEBI:77128"/>
    </reaction>
    <physiologicalReaction direction="left-to-right" evidence="19">
        <dbReference type="Rhea" id="RHEA:43241"/>
    </physiologicalReaction>
</comment>
<comment type="catalytic activity">
    <molecule>Isoform 3</molecule>
    <reaction evidence="9">
        <text>1,2-di-(9Z-octadecenoyl)-sn-glycero-3-phosphate + H2O = 1,2-di-(9Z-octadecenoyl)-sn-glycerol + phosphate</text>
        <dbReference type="Rhea" id="RHEA:43244"/>
        <dbReference type="ChEBI" id="CHEBI:15377"/>
        <dbReference type="ChEBI" id="CHEBI:43474"/>
        <dbReference type="ChEBI" id="CHEBI:52333"/>
        <dbReference type="ChEBI" id="CHEBI:74546"/>
    </reaction>
    <physiologicalReaction direction="left-to-right" evidence="19">
        <dbReference type="Rhea" id="RHEA:43245"/>
    </physiologicalReaction>
</comment>
<comment type="catalytic activity">
    <molecule>Isoform 4</molecule>
    <reaction evidence="15">
        <text>a 1,2-diacyl-sn-glycero-3-phosphate + H2O = a 1,2-diacyl-sn-glycerol + phosphate</text>
        <dbReference type="Rhea" id="RHEA:27429"/>
        <dbReference type="ChEBI" id="CHEBI:15377"/>
        <dbReference type="ChEBI" id="CHEBI:17815"/>
        <dbReference type="ChEBI" id="CHEBI:43474"/>
        <dbReference type="ChEBI" id="CHEBI:58608"/>
        <dbReference type="EC" id="3.1.3.4"/>
    </reaction>
    <physiologicalReaction direction="left-to-right" evidence="15">
        <dbReference type="Rhea" id="RHEA:27430"/>
    </physiologicalReaction>
</comment>
<comment type="catalytic activity">
    <molecule>Isoform 4</molecule>
    <reaction evidence="9">
        <text>1-octadecanoyl-2-(4Z,7Z,10Z,13Z,16Z,19Z-docosahexaenoyl)-sn-glycero-3-phosphate + H2O = 1-octadecanoyl-2-(4Z,7Z,10Z,13Z,16Z,19Z-docosahexaenoyl)-sn-glycerol + phosphate</text>
        <dbReference type="Rhea" id="RHEA:43296"/>
        <dbReference type="ChEBI" id="CHEBI:15377"/>
        <dbReference type="ChEBI" id="CHEBI:43474"/>
        <dbReference type="ChEBI" id="CHEBI:77129"/>
        <dbReference type="ChEBI" id="CHEBI:77130"/>
    </reaction>
    <physiologicalReaction direction="left-to-right" evidence="19">
        <dbReference type="Rhea" id="RHEA:43297"/>
    </physiologicalReaction>
</comment>
<comment type="catalytic activity">
    <molecule>Isoform 4</molecule>
    <reaction evidence="9">
        <text>1-octadecanoyl-2-(5Z,8Z,11Z,14Z-eicosatetraenoyl)-sn-glycero-3-phosphate + H2O = 1-octadecanoyl-2-(5Z,8Z,11Z,14Z-eicosatetraenoyl)-sn-glycerol + phosphate</text>
        <dbReference type="Rhea" id="RHEA:43292"/>
        <dbReference type="ChEBI" id="CHEBI:15377"/>
        <dbReference type="ChEBI" id="CHEBI:43474"/>
        <dbReference type="ChEBI" id="CHEBI:75728"/>
        <dbReference type="ChEBI" id="CHEBI:77091"/>
    </reaction>
    <physiologicalReaction direction="left-to-right" evidence="19">
        <dbReference type="Rhea" id="RHEA:43293"/>
    </physiologicalReaction>
</comment>
<comment type="catalytic activity">
    <molecule>Isoform 4</molecule>
    <reaction evidence="9">
        <text>1-octadecanoyl-2-(9Z,12Z-octadecadienoyl)-sn-glycero-3-phosphate + H2O = 1-octadecanoyl-2-(9Z,12Z)-octadecadienoyl-sn-glycerol + phosphate</text>
        <dbReference type="Rhea" id="RHEA:43288"/>
        <dbReference type="ChEBI" id="CHEBI:15377"/>
        <dbReference type="ChEBI" id="CHEBI:43474"/>
        <dbReference type="ChEBI" id="CHEBI:77097"/>
        <dbReference type="ChEBI" id="CHEBI:77098"/>
    </reaction>
    <physiologicalReaction direction="left-to-right" evidence="19">
        <dbReference type="Rhea" id="RHEA:43289"/>
    </physiologicalReaction>
</comment>
<comment type="catalytic activity">
    <molecule>Isoform 4</molecule>
    <reaction evidence="9">
        <text>1-octadecanoyl-2-(9Z-octadecenoyl)-sn-glycero-3-phosphate + H2O = 1-octadecanoyl-2-(9Z-octadecenoyl)-sn-glycerol + phosphate</text>
        <dbReference type="Rhea" id="RHEA:43284"/>
        <dbReference type="ChEBI" id="CHEBI:15377"/>
        <dbReference type="ChEBI" id="CHEBI:43474"/>
        <dbReference type="ChEBI" id="CHEBI:74560"/>
        <dbReference type="ChEBI" id="CHEBI:75468"/>
    </reaction>
    <physiologicalReaction direction="left-to-right" evidence="19">
        <dbReference type="Rhea" id="RHEA:43285"/>
    </physiologicalReaction>
</comment>
<comment type="catalytic activity">
    <molecule>Isoform 4</molecule>
    <reaction evidence="9">
        <text>1-hexadecanoyl-2-(4Z,7Z,10Z,13Z,16Z,19Z-docosahexaenoyl)-sn-glycero-3-phosphate + H2O = 1-hexadecanoyl-2-(4Z,7Z,10Z,13Z,16Z,19Z-docosahexaenoyl)-sn-glycerol + phosphate</text>
        <dbReference type="Rhea" id="RHEA:43280"/>
        <dbReference type="ChEBI" id="CHEBI:15377"/>
        <dbReference type="ChEBI" id="CHEBI:43474"/>
        <dbReference type="ChEBI" id="CHEBI:82928"/>
        <dbReference type="ChEBI" id="CHEBI:82949"/>
    </reaction>
    <physiologicalReaction direction="left-to-right" evidence="19">
        <dbReference type="Rhea" id="RHEA:43281"/>
    </physiologicalReaction>
</comment>
<comment type="catalytic activity">
    <molecule>Isoform 4</molecule>
    <reaction evidence="9">
        <text>1-hexadecanoyl-2-(5Z,8Z,11Z,14Z-eicosatetraenoyl)-sn-glycero-3-phosphate + H2O = 1-hexadecanoyl-2-(5Z,8Z,11Z,14Z-eicosatetraenoyl)-sn-glycerol + phosphate</text>
        <dbReference type="Rhea" id="RHEA:43260"/>
        <dbReference type="ChEBI" id="CHEBI:15377"/>
        <dbReference type="ChEBI" id="CHEBI:43474"/>
        <dbReference type="ChEBI" id="CHEBI:72864"/>
        <dbReference type="ChEBI" id="CHEBI:77096"/>
    </reaction>
    <physiologicalReaction direction="left-to-right" evidence="19">
        <dbReference type="Rhea" id="RHEA:43261"/>
    </physiologicalReaction>
</comment>
<comment type="catalytic activity">
    <molecule>Isoform 4</molecule>
    <reaction evidence="9">
        <text>1-hexadecanoyl-2-(9Z,12Z-octadecadienoyl)-sn-glycero-3-phosphate + H2O = 1-hexadecanoyl-2-(9Z,12Z-octadecadienoyl)-sn-glycerol + phosphate</text>
        <dbReference type="Rhea" id="RHEA:43256"/>
        <dbReference type="ChEBI" id="CHEBI:15377"/>
        <dbReference type="ChEBI" id="CHEBI:43474"/>
        <dbReference type="ChEBI" id="CHEBI:72860"/>
        <dbReference type="ChEBI" id="CHEBI:82927"/>
    </reaction>
    <physiologicalReaction direction="left-to-right" evidence="19">
        <dbReference type="Rhea" id="RHEA:43257"/>
    </physiologicalReaction>
</comment>
<comment type="catalytic activity">
    <molecule>Isoform 4</molecule>
    <reaction evidence="9">
        <text>1-hexadecanoyl-2-(9Z-octadecenoyl)-sn-glycero-3-phosphate + H2O = 1-hexadecanoyl-2-(9Z-octadecenoyl)-sn-glycerol + phosphate</text>
        <dbReference type="Rhea" id="RHEA:41255"/>
        <dbReference type="ChEBI" id="CHEBI:15377"/>
        <dbReference type="ChEBI" id="CHEBI:43474"/>
        <dbReference type="ChEBI" id="CHEBI:64839"/>
        <dbReference type="ChEBI" id="CHEBI:75466"/>
    </reaction>
    <physiologicalReaction direction="left-to-right" evidence="19">
        <dbReference type="Rhea" id="RHEA:41256"/>
    </physiologicalReaction>
</comment>
<comment type="catalytic activity">
    <molecule>Isoform 4</molecule>
    <reaction evidence="9">
        <text>1,2-di-(4Z,7Z,10Z,13Z,16Z,19Z-docosahexaenoyl)-sn-glycero-3-phosphate + H2O = 1,2-di-(4Z,7Z,10Z,13Z,16Z,19Z-docosahexaenoyl)-sn-glycerol + phosphate</text>
        <dbReference type="Rhea" id="RHEA:43252"/>
        <dbReference type="ChEBI" id="CHEBI:15377"/>
        <dbReference type="ChEBI" id="CHEBI:43474"/>
        <dbReference type="ChEBI" id="CHEBI:82924"/>
        <dbReference type="ChEBI" id="CHEBI:82925"/>
    </reaction>
    <physiologicalReaction direction="left-to-right" evidence="19">
        <dbReference type="Rhea" id="RHEA:43253"/>
    </physiologicalReaction>
</comment>
<comment type="catalytic activity">
    <molecule>Isoform 4</molecule>
    <reaction evidence="9">
        <text>1,2-di-(5Z,8Z,11Z,14Z)-eicosatetraenoyl-sn-glycero-3-phosphate + H2O = 1,2-di-(5Z,8Z,11Z,14Z)-eicosatetraenoyl-sn-glycerol + phosphate</text>
        <dbReference type="Rhea" id="RHEA:43248"/>
        <dbReference type="ChEBI" id="CHEBI:15377"/>
        <dbReference type="ChEBI" id="CHEBI:43474"/>
        <dbReference type="ChEBI" id="CHEBI:77125"/>
        <dbReference type="ChEBI" id="CHEBI:77126"/>
    </reaction>
    <physiologicalReaction direction="left-to-right" evidence="19">
        <dbReference type="Rhea" id="RHEA:43249"/>
    </physiologicalReaction>
</comment>
<comment type="catalytic activity">
    <molecule>Isoform 4</molecule>
    <reaction evidence="9">
        <text>1,2-di-(9Z,12Z-octadecadienoyl)-sn-glycero-3-phosphate + H2O = 1,2-di-(9Z,12Z-octadecadienoyl)-sn-glycerol + phosphate</text>
        <dbReference type="Rhea" id="RHEA:43240"/>
        <dbReference type="ChEBI" id="CHEBI:15377"/>
        <dbReference type="ChEBI" id="CHEBI:43474"/>
        <dbReference type="ChEBI" id="CHEBI:77127"/>
        <dbReference type="ChEBI" id="CHEBI:77128"/>
    </reaction>
    <physiologicalReaction direction="left-to-right" evidence="19">
        <dbReference type="Rhea" id="RHEA:43241"/>
    </physiologicalReaction>
</comment>
<comment type="catalytic activity">
    <molecule>Isoform 4</molecule>
    <reaction evidence="9">
        <text>1,2-di-(9Z-octadecenoyl)-sn-glycero-3-phosphate + H2O = 1,2-di-(9Z-octadecenoyl)-sn-glycerol + phosphate</text>
        <dbReference type="Rhea" id="RHEA:43244"/>
        <dbReference type="ChEBI" id="CHEBI:15377"/>
        <dbReference type="ChEBI" id="CHEBI:43474"/>
        <dbReference type="ChEBI" id="CHEBI:52333"/>
        <dbReference type="ChEBI" id="CHEBI:74546"/>
    </reaction>
</comment>
<comment type="cofactor">
    <cofactor evidence="9">
        <name>Mg(2+)</name>
        <dbReference type="ChEBI" id="CHEBI:18420"/>
    </cofactor>
    <cofactor evidence="9">
        <name>Mn(2+)</name>
        <dbReference type="ChEBI" id="CHEBI:29035"/>
    </cofactor>
    <text evidence="9">Mg(2+) and, at a lesser extent, Mn(2+).</text>
</comment>
<comment type="activity regulation">
    <text evidence="9">Potently inhibited by sphingolipids, in particular, the sphingoid bases sphinganine and sphingosine and ceramide-1-phosphate. Inhibited by concentrations of Mg(2+) and Mn(2+) above their optimums and by Ca(2+), Zn(2+), N-ethylmaleimide and propranolol.</text>
</comment>
<comment type="activity regulation">
    <molecule>Isoform 1</molecule>
    <text evidence="15">Sertraline and propanolol inhibit activity in dose-dependent manners with IC(50) values of 103 uM and 226 uM, respectively.</text>
</comment>
<comment type="activity regulation">
    <molecule>Isoform 3</molecule>
    <text evidence="15">Sertraline and propanolol inhibit activity in dose-dependent manners with IC(50) values of 108 uM and 271 uM, respectively.</text>
</comment>
<comment type="activity regulation">
    <molecule>Isoform 4</molecule>
    <text evidence="15">Sertraline and propanolol inhibit activity in dose-dependent manners with IC(50) values of 143 uM and 227 uM, respectively.</text>
</comment>
<comment type="biophysicochemical properties">
    <kinetics>
        <KM evidence="9">0.35 mM for phosphatidate (isoform 1)</KM>
        <KM evidence="9">0.24 mM for phosphatidate (isoform 3)</KM>
        <KM evidence="9">0.11 mM for phosphatidate (isoform 4)</KM>
    </kinetics>
    <temperatureDependence>
        <text evidence="9">Optimum temperature is 40 degrees Celsius. Thermolabile above 40 degrees Celsius and essentially inactive at 60 degrees Celsius.</text>
    </temperatureDependence>
</comment>
<comment type="subunit">
    <text evidence="1">Interacts (via LXXIL motif) with PPARA (By similarity). Interacts with PPARGC1A. Interaction with PPARA and PPARGC1A leads to the formation of a complex that modulates gene transcription (By similarity). Interacts with MEF2C (By similarity).</text>
</comment>
<comment type="interaction">
    <interactant intactId="EBI-5278370">
        <id>Q14693</id>
    </interactant>
    <interactant intactId="EBI-702390">
        <id>Q9UBB4</id>
        <label>ATXN10</label>
    </interactant>
    <organismsDiffer>false</organismsDiffer>
    <experiments>3</experiments>
</comment>
<comment type="interaction">
    <interactant intactId="EBI-5278370">
        <id>Q14693</id>
    </interactant>
    <interactant intactId="EBI-8589586">
        <id>P09172</id>
        <label>DBH</label>
    </interactant>
    <organismsDiffer>false</organismsDiffer>
    <experiments>3</experiments>
</comment>
<comment type="interaction">
    <interactant intactId="EBI-5278370">
        <id>Q14693</id>
    </interactant>
    <interactant intactId="EBI-750300">
        <id>Q01658</id>
        <label>DR1</label>
    </interactant>
    <organismsDiffer>false</organismsDiffer>
    <experiments>3</experiments>
</comment>
<comment type="interaction">
    <interactant intactId="EBI-5278370">
        <id>Q14693</id>
    </interactant>
    <interactant intactId="EBI-9641086">
        <id>P21333-2</id>
        <label>FLNA</label>
    </interactant>
    <organismsDiffer>false</organismsDiffer>
    <experiments>3</experiments>
</comment>
<comment type="interaction">
    <interactant intactId="EBI-5278370">
        <id>Q14693</id>
    </interactant>
    <interactant intactId="EBI-852851">
        <id>P01100</id>
        <label>FOS</label>
    </interactant>
    <organismsDiffer>false</organismsDiffer>
    <experiments>3</experiments>
</comment>
<comment type="interaction">
    <interactant intactId="EBI-5278370">
        <id>Q14693</id>
    </interactant>
    <interactant intactId="EBI-2552594">
        <id>P50440</id>
        <label>GATM</label>
    </interactant>
    <organismsDiffer>false</organismsDiffer>
    <experiments>3</experiments>
</comment>
<comment type="interaction">
    <interactant intactId="EBI-5278370">
        <id>Q14693</id>
    </interactant>
    <interactant intactId="EBI-744302">
        <id>P14136</id>
        <label>GFAP</label>
    </interactant>
    <organismsDiffer>false</organismsDiffer>
    <experiments>3</experiments>
</comment>
<comment type="interaction">
    <interactant intactId="EBI-5278370">
        <id>Q14693</id>
    </interactant>
    <interactant intactId="EBI-401755">
        <id>P62993</id>
        <label>GRB2</label>
    </interactant>
    <organismsDiffer>false</organismsDiffer>
    <experiments>3</experiments>
</comment>
<comment type="interaction">
    <interactant intactId="EBI-5278370">
        <id>Q14693</id>
    </interactant>
    <interactant intactId="EBI-747754">
        <id>P28799</id>
        <label>GRN</label>
    </interactant>
    <organismsDiffer>false</organismsDiffer>
    <experiments>3</experiments>
</comment>
<comment type="interaction">
    <interactant intactId="EBI-5278370">
        <id>Q14693</id>
    </interactant>
    <interactant intactId="EBI-389564">
        <id>Q00403</id>
        <label>GTF2B</label>
    </interactant>
    <organismsDiffer>false</organismsDiffer>
    <experiments>3</experiments>
</comment>
<comment type="interaction">
    <interactant intactId="EBI-5278370">
        <id>Q14693</id>
    </interactant>
    <interactant intactId="EBI-1054873">
        <id>Q9Y5Q9</id>
        <label>GTF3C3</label>
    </interactant>
    <organismsDiffer>false</organismsDiffer>
    <experiments>3</experiments>
</comment>
<comment type="interaction">
    <interactant intactId="EBI-5278370">
        <id>Q14693</id>
    </interactant>
    <interactant intactId="EBI-719620">
        <id>Q00613</id>
        <label>HSF1</label>
    </interactant>
    <organismsDiffer>false</organismsDiffer>
    <experiments>3</experiments>
</comment>
<comment type="interaction">
    <interactant intactId="EBI-5278370">
        <id>Q14693</id>
    </interactant>
    <interactant intactId="EBI-352682">
        <id>P04792</id>
        <label>HSPB1</label>
    </interactant>
    <organismsDiffer>false</organismsDiffer>
    <experiments>3</experiments>
</comment>
<comment type="interaction">
    <interactant intactId="EBI-5278370">
        <id>Q14693</id>
    </interactant>
    <interactant intactId="EBI-466029">
        <id>P42858</id>
        <label>HTT</label>
    </interactant>
    <organismsDiffer>false</organismsDiffer>
    <experiments>12</experiments>
</comment>
<comment type="interaction">
    <interactant intactId="EBI-5278370">
        <id>Q14693</id>
    </interactant>
    <interactant intactId="EBI-1055254">
        <id>Q8WXH2</id>
        <label>JPH3</label>
    </interactant>
    <organismsDiffer>false</organismsDiffer>
    <experiments>3</experiments>
</comment>
<comment type="interaction">
    <interactant intactId="EBI-5278370">
        <id>Q14693</id>
    </interactant>
    <interactant intactId="EBI-10975473">
        <id>O60333-2</id>
        <label>KIF1B</label>
    </interactant>
    <organismsDiffer>false</organismsDiffer>
    <experiments>3</experiments>
</comment>
<comment type="interaction">
    <interactant intactId="EBI-5278370">
        <id>Q14693</id>
    </interactant>
    <interactant intactId="EBI-473160">
        <id>Q8N2W9</id>
        <label>PIAS4</label>
    </interactant>
    <organismsDiffer>false</organismsDiffer>
    <experiments>3</experiments>
</comment>
<comment type="interaction">
    <interactant intactId="EBI-5278370">
        <id>Q14693</id>
    </interactant>
    <interactant intactId="EBI-396669">
        <id>Q9Y3C5</id>
        <label>RNF11</label>
    </interactant>
    <organismsDiffer>false</organismsDiffer>
    <experiments>3</experiments>
</comment>
<comment type="interaction">
    <interactant intactId="EBI-5278370">
        <id>Q14693</id>
    </interactant>
    <interactant intactId="EBI-621482">
        <id>P12931</id>
        <label>SRC</label>
    </interactant>
    <organismsDiffer>false</organismsDiffer>
    <experiments>3</experiments>
</comment>
<comment type="interaction">
    <interactant intactId="EBI-5278370">
        <id>Q14693</id>
    </interactant>
    <interactant intactId="EBI-720609">
        <id>O76024</id>
        <label>WFS1</label>
    </interactant>
    <organismsDiffer>false</organismsDiffer>
    <experiments>3</experiments>
</comment>
<comment type="subcellular location">
    <subcellularLocation>
        <location evidence="12">Cytoplasm</location>
        <location evidence="12">Cytosol</location>
    </subcellularLocation>
    <subcellularLocation>
        <location evidence="12">Endoplasmic reticulum membrane</location>
    </subcellularLocation>
    <subcellularLocation>
        <location evidence="1">Nucleus membrane</location>
    </subcellularLocation>
    <text evidence="12">Translocates from the cytosol to the endoplasmic reticulum following acetylation by KAT5.</text>
</comment>
<comment type="alternative products">
    <event type="alternative splicing"/>
    <isoform>
        <id>Q14693-1</id>
        <name>1</name>
        <name>Alpha</name>
        <sequence type="displayed"/>
    </isoform>
    <isoform>
        <id>Q14693-2</id>
        <name>2</name>
        <sequence type="described" ref="VSP_045533"/>
    </isoform>
    <isoform>
        <id>Q14693-3</id>
        <name>3</name>
        <name>Beta</name>
        <sequence type="described" ref="VSP_053970"/>
    </isoform>
    <isoform>
        <id>Q14693-4</id>
        <name>4</name>
        <name>Gamma</name>
        <sequence type="described" ref="VSP_053971"/>
    </isoform>
    <isoform>
        <id>Q14693-5</id>
        <name>5</name>
        <sequence type="described" ref="VSP_045533 VSP_053970"/>
    </isoform>
    <isoform>
        <id>Q14693-6</id>
        <name>6</name>
        <sequence type="described" ref="VSP_045533 VSP_053970 VSP_055361 VSP_055362"/>
    </isoform>
    <isoform>
        <id>Q14693-7</id>
        <name>7</name>
        <sequence type="described" ref="VSP_055384 VSP_053970"/>
    </isoform>
</comment>
<comment type="tissue specificity">
    <text evidence="7 10">Specifically expressed in skeletal muscle. Also abundant in adipose tissue. Lower levels in some portions of the digestive tract.</text>
</comment>
<comment type="domain">
    <text evidence="1">Contains one Leu-Xaa-Xaa-Ile-Leu (LXXIL), a transcriptional binding motif, which mediates interaction with PPARA.</text>
</comment>
<comment type="domain">
    <text evidence="1">Contains 1 Asp-Xaa-Asp-Xaa-Thr (DXDXT) motif, a catalytic motif essential for phosphatidate phosphatase activity.</text>
</comment>
<comment type="PTM">
    <text evidence="1 11 13">Phosphorylated at multiple sites by mTOR in response to insulin, leading to its inactivation (PubMed:23426360). Phosphorylation does not affect the catalytic activity but regulates the localization (By similarity). Phosphorylation is decreased by epinephrine (By similarity). Dephosphorylated by the CTDNEP1-CNEP1R1 complex (By similarity). Dephosphorylation following mTOR inhibition promotes its activity (PubMed:31695197).</text>
</comment>
<comment type="PTM">
    <text evidence="12">Acetylation at Lys-425 and Lys-595 by KAT5 in response to fatty acids promotes translocation to the endoplasmic reticulum and synthesis of diacylglycerol.</text>
</comment>
<comment type="PTM">
    <text evidence="1">Sumoylated.</text>
</comment>
<comment type="disease" evidence="8">
    <disease id="DI-01227">
        <name>Myoglobinuria, acute recurrent, autosomal recessive</name>
        <acronym>ARARM</acronym>
        <description>Recurrent myoglobinuria is characterized by recurrent attacks of rhabdomyolysis (necrosis or disintegration of skeletal muscle) associated with muscle pain and weakness and followed by excretion of myoglobin in the urine. Renal failure may occasionally occur.</description>
        <dbReference type="MIM" id="268200"/>
    </disease>
    <text>The disease is caused by variants affecting the gene represented in this entry.</text>
</comment>
<comment type="miscellaneous">
    <text>May represent a candidate gene for human lipodysytropy syndromes.</text>
</comment>
<comment type="similarity">
    <text evidence="18">Belongs to the lipin family.</text>
</comment>
<comment type="sequence caution" evidence="18">
    <conflict type="erroneous initiation">
        <sequence resource="EMBL-CDS" id="BAA11505"/>
    </conflict>
    <text>Extended N-terminus.</text>
</comment>
<comment type="sequence caution" evidence="18">
    <conflict type="erroneous initiation">
        <sequence resource="EMBL-CDS" id="BAG57200"/>
    </conflict>
    <text>Truncated N-terminus.</text>
</comment>
<comment type="sequence caution" evidence="18">
    <conflict type="erroneous initiation">
        <sequence resource="EMBL-CDS" id="BAG57885"/>
    </conflict>
    <text>Extended N-terminus.</text>
</comment>
<comment type="sequence caution" evidence="18">
    <conflict type="erroneous initiation">
        <sequence resource="EMBL-CDS" id="BAG57957"/>
    </conflict>
    <text>Truncated N-terminus.</text>
</comment>
<comment type="sequence caution" evidence="18">
    <conflict type="frameshift">
        <sequence resource="EMBL" id="BC018071"/>
    </conflict>
</comment>
<keyword id="KW-0007">Acetylation</keyword>
<keyword id="KW-0025">Alternative splicing</keyword>
<keyword id="KW-0963">Cytoplasm</keyword>
<keyword id="KW-0256">Endoplasmic reticulum</keyword>
<keyword id="KW-0276">Fatty acid metabolism</keyword>
<keyword id="KW-0378">Hydrolase</keyword>
<keyword id="KW-1017">Isopeptide bond</keyword>
<keyword id="KW-0443">Lipid metabolism</keyword>
<keyword id="KW-0472">Membrane</keyword>
<keyword id="KW-0539">Nucleus</keyword>
<keyword id="KW-0597">Phosphoprotein</keyword>
<keyword id="KW-1267">Proteomics identification</keyword>
<keyword id="KW-1185">Reference proteome</keyword>
<keyword id="KW-0804">Transcription</keyword>
<keyword id="KW-0805">Transcription regulation</keyword>
<keyword id="KW-0832">Ubl conjugation</keyword>
<gene>
    <name evidence="22" type="primary">LPIN1</name>
    <name type="synonym">KIAA0188</name>
</gene>
<name>LPIN1_HUMAN</name>
<organism>
    <name type="scientific">Homo sapiens</name>
    <name type="common">Human</name>
    <dbReference type="NCBI Taxonomy" id="9606"/>
    <lineage>
        <taxon>Eukaryota</taxon>
        <taxon>Metazoa</taxon>
        <taxon>Chordata</taxon>
        <taxon>Craniata</taxon>
        <taxon>Vertebrata</taxon>
        <taxon>Euteleostomi</taxon>
        <taxon>Mammalia</taxon>
        <taxon>Eutheria</taxon>
        <taxon>Euarchontoglires</taxon>
        <taxon>Primates</taxon>
        <taxon>Haplorrhini</taxon>
        <taxon>Catarrhini</taxon>
        <taxon>Hominidae</taxon>
        <taxon>Homo</taxon>
    </lineage>
</organism>
<feature type="chain" id="PRO_0000209879" description="Phosphatidate phosphatase LPIN1">
    <location>
        <begin position="1"/>
        <end position="890"/>
    </location>
</feature>
<feature type="region of interest" description="N-LIP">
    <location>
        <begin position="1"/>
        <end position="108"/>
    </location>
</feature>
<feature type="region of interest" description="Disordered" evidence="3">
    <location>
        <begin position="125"/>
        <end position="183"/>
    </location>
</feature>
<feature type="region of interest" description="Disordered" evidence="3">
    <location>
        <begin position="228"/>
        <end position="300"/>
    </location>
</feature>
<feature type="region of interest" description="Disordered" evidence="3">
    <location>
        <begin position="365"/>
        <end position="392"/>
    </location>
</feature>
<feature type="region of interest" description="Disordered" evidence="3">
    <location>
        <begin position="421"/>
        <end position="456"/>
    </location>
</feature>
<feature type="region of interest" description="Disordered" evidence="3">
    <location>
        <begin position="566"/>
        <end position="616"/>
    </location>
</feature>
<feature type="region of interest" description="C-LIP">
    <location>
        <begin position="624"/>
        <end position="830"/>
    </location>
</feature>
<feature type="short sequence motif" description="Nuclear localization signal" evidence="2">
    <location>
        <begin position="153"/>
        <end position="158"/>
    </location>
</feature>
<feature type="short sequence motif" description="DXDXT motif">
    <location>
        <begin position="678"/>
        <end position="682"/>
    </location>
</feature>
<feature type="short sequence motif" description="LXXIL motif">
    <location>
        <begin position="689"/>
        <end position="693"/>
    </location>
</feature>
<feature type="compositionally biased region" description="Basic residues" evidence="3">
    <location>
        <begin position="152"/>
        <end position="161"/>
    </location>
</feature>
<feature type="compositionally biased region" description="Basic and acidic residues" evidence="3">
    <location>
        <begin position="162"/>
        <end position="172"/>
    </location>
</feature>
<feature type="compositionally biased region" description="Basic and acidic residues" evidence="3">
    <location>
        <begin position="252"/>
        <end position="265"/>
    </location>
</feature>
<feature type="compositionally biased region" description="Polar residues" evidence="3">
    <location>
        <begin position="431"/>
        <end position="440"/>
    </location>
</feature>
<feature type="compositionally biased region" description="Low complexity" evidence="3">
    <location>
        <begin position="441"/>
        <end position="456"/>
    </location>
</feature>
<feature type="compositionally biased region" description="Polar residues" evidence="3">
    <location>
        <begin position="581"/>
        <end position="590"/>
    </location>
</feature>
<feature type="compositionally biased region" description="Basic and acidic residues" evidence="3">
    <location>
        <begin position="594"/>
        <end position="607"/>
    </location>
</feature>
<feature type="modified residue" description="Phosphoserine" evidence="1">
    <location>
        <position position="106"/>
    </location>
</feature>
<feature type="modified residue" description="Phosphoserine" evidence="1">
    <location>
        <position position="150"/>
    </location>
</feature>
<feature type="modified residue" description="Phosphoserine" evidence="1">
    <location>
        <position position="252"/>
    </location>
</feature>
<feature type="modified residue" description="Phosphoserine" evidence="1">
    <location>
        <position position="254"/>
    </location>
</feature>
<feature type="modified residue" description="Phosphoserine" evidence="1">
    <location>
        <position position="260"/>
    </location>
</feature>
<feature type="modified residue" description="Phosphothreonine" evidence="1">
    <location>
        <position position="264"/>
    </location>
</feature>
<feature type="modified residue" description="Phosphoserine" evidence="1">
    <location>
        <position position="294"/>
    </location>
</feature>
<feature type="modified residue" description="N6-acetyllysine" evidence="12">
    <location>
        <position position="425"/>
    </location>
</feature>
<feature type="modified residue" description="Phosphoserine" evidence="1">
    <location>
        <position position="434"/>
    </location>
</feature>
<feature type="modified residue" description="Phosphoserine" evidence="1">
    <location>
        <position position="438"/>
    </location>
</feature>
<feature type="modified residue" description="Phosphoserine" evidence="1">
    <location>
        <position position="449"/>
    </location>
</feature>
<feature type="modified residue" description="N6-acetyllysine" evidence="12">
    <location>
        <position position="595"/>
    </location>
</feature>
<feature type="modified residue" description="Phosphoserine" evidence="1">
    <location>
        <position position="600"/>
    </location>
</feature>
<feature type="modified residue" description="Phosphoserine" evidence="1">
    <location>
        <position position="601"/>
    </location>
</feature>
<feature type="modified residue" description="Phosphoserine" evidence="1">
    <location>
        <position position="887"/>
    </location>
</feature>
<feature type="modified residue" description="Phosphoserine" evidence="1">
    <location>
        <position position="889"/>
    </location>
</feature>
<feature type="cross-link" description="Glycyl lysine isopeptide (Lys-Gly) (interchain with G-Cter in SUMO)" evidence="1">
    <location>
        <position position="565"/>
    </location>
</feature>
<feature type="cross-link" description="Glycyl lysine isopeptide (Lys-Gly) (interchain with G-Cter in SUMO)" evidence="1">
    <location>
        <position position="595"/>
    </location>
</feature>
<feature type="splice variant" id="VSP_045533" description="In isoform 2, isoform 5 and isoform 6." evidence="16 17">
    <original>M</original>
    <variation>MSRVQTM</variation>
    <location>
        <position position="1"/>
    </location>
</feature>
<feature type="splice variant" id="VSP_055384" description="In isoform 7." evidence="18">
    <original>M</original>
    <variation>MGEQDGIRSSSWETSQGKSSPDSAWSWIPIMRDPGWIRNVWSSNINVQTM</variation>
    <location>
        <position position="1"/>
    </location>
</feature>
<feature type="splice variant" id="VSP_053970" description="In isoform 3, isoform 5, isoform 6 and isoform 7." evidence="16 17">
    <original>S</original>
    <variation>SSLVDCKRTAPHLAVAAEGGLSSSCPPQSSLFHPSES</variation>
    <location>
        <position position="241"/>
    </location>
</feature>
<feature type="splice variant" id="VSP_055361" description="In isoform 6." evidence="17">
    <original>N</original>
    <variation>K</variation>
    <location>
        <position position="417"/>
    </location>
</feature>
<feature type="splice variant" id="VSP_055362" description="In isoform 6." evidence="17">
    <location>
        <begin position="418"/>
        <end position="890"/>
    </location>
</feature>
<feature type="splice variant" id="VSP_053971" description="In isoform 4." evidence="16">
    <original>K</original>
    <variation>KSSCLSYLHVILDAIRFCFSKIFNAQI</variation>
    <location>
        <position position="535"/>
    </location>
</feature>
<feature type="sequence variant" id="VAR_035874" description="In a colorectal cancer sample; somatic mutation." evidence="6">
    <original>G</original>
    <variation>E</variation>
    <location>
        <position position="56"/>
    </location>
</feature>
<feature type="sequence variant" id="VAR_090199" description="In dbSNP:rs185471985." evidence="14">
    <original>P</original>
    <variation>R</variation>
    <location>
        <position position="367"/>
    </location>
</feature>
<feature type="sequence variant" id="VAR_013885" description="In dbSNP:rs4669781." evidence="4">
    <original>P</original>
    <variation>S</variation>
    <location>
        <position position="610"/>
    </location>
</feature>
<feature type="sequence variant" id="VAR_054878" description="In dbSNP:rs17852755." evidence="5">
    <original>S</original>
    <variation>T</variation>
    <location>
        <position position="637"/>
    </location>
</feature>
<feature type="mutagenesis site" description="Decreased acetylation by KAT5." evidence="12">
    <original>K</original>
    <variation>R</variation>
    <location>
        <position position="425"/>
    </location>
</feature>
<feature type="mutagenesis site" description="Decreased acetylation by KAT5." evidence="12">
    <original>K</original>
    <variation>R</variation>
    <location>
        <position position="595"/>
    </location>
</feature>
<feature type="sequence conflict" description="In Ref. 5; BC018071." evidence="18" ref="5">
    <original>D</original>
    <variation>G</variation>
    <location>
        <position position="171"/>
    </location>
</feature>
<feature type="sequence conflict" description="In Ref. 2; BAG57885." evidence="18" ref="2">
    <original>D</original>
    <variation>G</variation>
    <location>
        <position position="210"/>
    </location>
</feature>
<feature type="sequence conflict" description="In Ref. 2; BAH13844." evidence="18" ref="2">
    <original>D</original>
    <variation>Y</variation>
    <location>
        <position position="316"/>
    </location>
</feature>
<feature type="sequence conflict" description="In Ref. 2; BAH13844." evidence="18" ref="2">
    <original>K</original>
    <variation>R</variation>
    <location>
        <position position="535"/>
    </location>
</feature>
<feature type="sequence conflict" description="In Ref. 2; BAG57885." evidence="18" ref="2">
    <original>T</original>
    <variation>I</variation>
    <location>
        <position position="592"/>
    </location>
</feature>
<reference key="1">
    <citation type="journal article" date="1996" name="DNA Res.">
        <title>Prediction of the coding sequences of unidentified human genes. V. The coding sequences of 40 new genes (KIAA0161-KIAA0200) deduced by analysis of cDNA clones from human cell line KG-1.</title>
        <authorList>
            <person name="Nagase T."/>
            <person name="Seki N."/>
            <person name="Ishikawa K."/>
            <person name="Tanaka A."/>
            <person name="Nomura N."/>
        </authorList>
    </citation>
    <scope>NUCLEOTIDE SEQUENCE [LARGE SCALE MRNA] (ISOFORM 1)</scope>
    <source>
        <tissue>Bone marrow</tissue>
    </source>
</reference>
<reference key="2">
    <citation type="journal article" date="2004" name="Nat. Genet.">
        <title>Complete sequencing and characterization of 21,243 full-length human cDNAs.</title>
        <authorList>
            <person name="Ota T."/>
            <person name="Suzuki Y."/>
            <person name="Nishikawa T."/>
            <person name="Otsuki T."/>
            <person name="Sugiyama T."/>
            <person name="Irie R."/>
            <person name="Wakamatsu A."/>
            <person name="Hayashi K."/>
            <person name="Sato H."/>
            <person name="Nagai K."/>
            <person name="Kimura K."/>
            <person name="Makita H."/>
            <person name="Sekine M."/>
            <person name="Obayashi M."/>
            <person name="Nishi T."/>
            <person name="Shibahara T."/>
            <person name="Tanaka T."/>
            <person name="Ishii S."/>
            <person name="Yamamoto J."/>
            <person name="Saito K."/>
            <person name="Kawai Y."/>
            <person name="Isono Y."/>
            <person name="Nakamura Y."/>
            <person name="Nagahari K."/>
            <person name="Murakami K."/>
            <person name="Yasuda T."/>
            <person name="Iwayanagi T."/>
            <person name="Wagatsuma M."/>
            <person name="Shiratori A."/>
            <person name="Sudo H."/>
            <person name="Hosoiri T."/>
            <person name="Kaku Y."/>
            <person name="Kodaira H."/>
            <person name="Kondo H."/>
            <person name="Sugawara M."/>
            <person name="Takahashi M."/>
            <person name="Kanda K."/>
            <person name="Yokoi T."/>
            <person name="Furuya T."/>
            <person name="Kikkawa E."/>
            <person name="Omura Y."/>
            <person name="Abe K."/>
            <person name="Kamihara K."/>
            <person name="Katsuta N."/>
            <person name="Sato K."/>
            <person name="Tanikawa M."/>
            <person name="Yamazaki M."/>
            <person name="Ninomiya K."/>
            <person name="Ishibashi T."/>
            <person name="Yamashita H."/>
            <person name="Murakawa K."/>
            <person name="Fujimori K."/>
            <person name="Tanai H."/>
            <person name="Kimata M."/>
            <person name="Watanabe M."/>
            <person name="Hiraoka S."/>
            <person name="Chiba Y."/>
            <person name="Ishida S."/>
            <person name="Ono Y."/>
            <person name="Takiguchi S."/>
            <person name="Watanabe S."/>
            <person name="Yosida M."/>
            <person name="Hotuta T."/>
            <person name="Kusano J."/>
            <person name="Kanehori K."/>
            <person name="Takahashi-Fujii A."/>
            <person name="Hara H."/>
            <person name="Tanase T.-O."/>
            <person name="Nomura Y."/>
            <person name="Togiya S."/>
            <person name="Komai F."/>
            <person name="Hara R."/>
            <person name="Takeuchi K."/>
            <person name="Arita M."/>
            <person name="Imose N."/>
            <person name="Musashino K."/>
            <person name="Yuuki H."/>
            <person name="Oshima A."/>
            <person name="Sasaki N."/>
            <person name="Aotsuka S."/>
            <person name="Yoshikawa Y."/>
            <person name="Matsunawa H."/>
            <person name="Ichihara T."/>
            <person name="Shiohata N."/>
            <person name="Sano S."/>
            <person name="Moriya S."/>
            <person name="Momiyama H."/>
            <person name="Satoh N."/>
            <person name="Takami S."/>
            <person name="Terashima Y."/>
            <person name="Suzuki O."/>
            <person name="Nakagawa S."/>
            <person name="Senoh A."/>
            <person name="Mizoguchi H."/>
            <person name="Goto Y."/>
            <person name="Shimizu F."/>
            <person name="Wakebe H."/>
            <person name="Hishigaki H."/>
            <person name="Watanabe T."/>
            <person name="Sugiyama A."/>
            <person name="Takemoto M."/>
            <person name="Kawakami B."/>
            <person name="Yamazaki M."/>
            <person name="Watanabe K."/>
            <person name="Kumagai A."/>
            <person name="Itakura S."/>
            <person name="Fukuzumi Y."/>
            <person name="Fujimori Y."/>
            <person name="Komiyama M."/>
            <person name="Tashiro H."/>
            <person name="Tanigami A."/>
            <person name="Fujiwara T."/>
            <person name="Ono T."/>
            <person name="Yamada K."/>
            <person name="Fujii Y."/>
            <person name="Ozaki K."/>
            <person name="Hirao M."/>
            <person name="Ohmori Y."/>
            <person name="Kawabata A."/>
            <person name="Hikiji T."/>
            <person name="Kobatake N."/>
            <person name="Inagaki H."/>
            <person name="Ikema Y."/>
            <person name="Okamoto S."/>
            <person name="Okitani R."/>
            <person name="Kawakami T."/>
            <person name="Noguchi S."/>
            <person name="Itoh T."/>
            <person name="Shigeta K."/>
            <person name="Senba T."/>
            <person name="Matsumura K."/>
            <person name="Nakajima Y."/>
            <person name="Mizuno T."/>
            <person name="Morinaga M."/>
            <person name="Sasaki M."/>
            <person name="Togashi T."/>
            <person name="Oyama M."/>
            <person name="Hata H."/>
            <person name="Watanabe M."/>
            <person name="Komatsu T."/>
            <person name="Mizushima-Sugano J."/>
            <person name="Satoh T."/>
            <person name="Shirai Y."/>
            <person name="Takahashi Y."/>
            <person name="Nakagawa K."/>
            <person name="Okumura K."/>
            <person name="Nagase T."/>
            <person name="Nomura N."/>
            <person name="Kikuchi H."/>
            <person name="Masuho Y."/>
            <person name="Yamashita R."/>
            <person name="Nakai K."/>
            <person name="Yada T."/>
            <person name="Nakamura Y."/>
            <person name="Ohara O."/>
            <person name="Isogai T."/>
            <person name="Sugano S."/>
        </authorList>
    </citation>
    <scope>NUCLEOTIDE SEQUENCE [LARGE SCALE MRNA] (ISOFORMS 1; 2 AND 4)</scope>
    <scope>NUCLEOTIDE SEQUENCE [MRNA] OF 481-890 (ISOFORM 3)</scope>
    <source>
        <tissue>Brain</tissue>
        <tissue>Cerebellum</tissue>
        <tissue>Testis</tissue>
        <tissue>Thalamus</tissue>
    </source>
</reference>
<reference key="3">
    <citation type="journal article" date="2005" name="Nature">
        <title>Generation and annotation of the DNA sequences of human chromosomes 2 and 4.</title>
        <authorList>
            <person name="Hillier L.W."/>
            <person name="Graves T.A."/>
            <person name="Fulton R.S."/>
            <person name="Fulton L.A."/>
            <person name="Pepin K.H."/>
            <person name="Minx P."/>
            <person name="Wagner-McPherson C."/>
            <person name="Layman D."/>
            <person name="Wylie K."/>
            <person name="Sekhon M."/>
            <person name="Becker M.C."/>
            <person name="Fewell G.A."/>
            <person name="Delehaunty K.D."/>
            <person name="Miner T.L."/>
            <person name="Nash W.E."/>
            <person name="Kremitzki C."/>
            <person name="Oddy L."/>
            <person name="Du H."/>
            <person name="Sun H."/>
            <person name="Bradshaw-Cordum H."/>
            <person name="Ali J."/>
            <person name="Carter J."/>
            <person name="Cordes M."/>
            <person name="Harris A."/>
            <person name="Isak A."/>
            <person name="van Brunt A."/>
            <person name="Nguyen C."/>
            <person name="Du F."/>
            <person name="Courtney L."/>
            <person name="Kalicki J."/>
            <person name="Ozersky P."/>
            <person name="Abbott S."/>
            <person name="Armstrong J."/>
            <person name="Belter E.A."/>
            <person name="Caruso L."/>
            <person name="Cedroni M."/>
            <person name="Cotton M."/>
            <person name="Davidson T."/>
            <person name="Desai A."/>
            <person name="Elliott G."/>
            <person name="Erb T."/>
            <person name="Fronick C."/>
            <person name="Gaige T."/>
            <person name="Haakenson W."/>
            <person name="Haglund K."/>
            <person name="Holmes A."/>
            <person name="Harkins R."/>
            <person name="Kim K."/>
            <person name="Kruchowski S.S."/>
            <person name="Strong C.M."/>
            <person name="Grewal N."/>
            <person name="Goyea E."/>
            <person name="Hou S."/>
            <person name="Levy A."/>
            <person name="Martinka S."/>
            <person name="Mead K."/>
            <person name="McLellan M.D."/>
            <person name="Meyer R."/>
            <person name="Randall-Maher J."/>
            <person name="Tomlinson C."/>
            <person name="Dauphin-Kohlberg S."/>
            <person name="Kozlowicz-Reilly A."/>
            <person name="Shah N."/>
            <person name="Swearengen-Shahid S."/>
            <person name="Snider J."/>
            <person name="Strong J.T."/>
            <person name="Thompson J."/>
            <person name="Yoakum M."/>
            <person name="Leonard S."/>
            <person name="Pearman C."/>
            <person name="Trani L."/>
            <person name="Radionenko M."/>
            <person name="Waligorski J.E."/>
            <person name="Wang C."/>
            <person name="Rock S.M."/>
            <person name="Tin-Wollam A.-M."/>
            <person name="Maupin R."/>
            <person name="Latreille P."/>
            <person name="Wendl M.C."/>
            <person name="Yang S.-P."/>
            <person name="Pohl C."/>
            <person name="Wallis J.W."/>
            <person name="Spieth J."/>
            <person name="Bieri T.A."/>
            <person name="Berkowicz N."/>
            <person name="Nelson J.O."/>
            <person name="Osborne J."/>
            <person name="Ding L."/>
            <person name="Meyer R."/>
            <person name="Sabo A."/>
            <person name="Shotland Y."/>
            <person name="Sinha P."/>
            <person name="Wohldmann P.E."/>
            <person name="Cook L.L."/>
            <person name="Hickenbotham M.T."/>
            <person name="Eldred J."/>
            <person name="Williams D."/>
            <person name="Jones T.A."/>
            <person name="She X."/>
            <person name="Ciccarelli F.D."/>
            <person name="Izaurralde E."/>
            <person name="Taylor J."/>
            <person name="Schmutz J."/>
            <person name="Myers R.M."/>
            <person name="Cox D.R."/>
            <person name="Huang X."/>
            <person name="McPherson J.D."/>
            <person name="Mardis E.R."/>
            <person name="Clifton S.W."/>
            <person name="Warren W.C."/>
            <person name="Chinwalla A.T."/>
            <person name="Eddy S.R."/>
            <person name="Marra M.A."/>
            <person name="Ovcharenko I."/>
            <person name="Furey T.S."/>
            <person name="Miller W."/>
            <person name="Eichler E.E."/>
            <person name="Bork P."/>
            <person name="Suyama M."/>
            <person name="Torrents D."/>
            <person name="Waterston R.H."/>
            <person name="Wilson R.K."/>
        </authorList>
    </citation>
    <scope>NUCLEOTIDE SEQUENCE [LARGE SCALE GENOMIC DNA]</scope>
</reference>
<reference key="4">
    <citation type="submission" date="2005-09" db="EMBL/GenBank/DDBJ databases">
        <authorList>
            <person name="Mural R.J."/>
            <person name="Istrail S."/>
            <person name="Sutton G."/>
            <person name="Florea L."/>
            <person name="Halpern A.L."/>
            <person name="Mobarry C.M."/>
            <person name="Lippert R."/>
            <person name="Walenz B."/>
            <person name="Shatkay H."/>
            <person name="Dew I."/>
            <person name="Miller J.R."/>
            <person name="Flanigan M.J."/>
            <person name="Edwards N.J."/>
            <person name="Bolanos R."/>
            <person name="Fasulo D."/>
            <person name="Halldorsson B.V."/>
            <person name="Hannenhalli S."/>
            <person name="Turner R."/>
            <person name="Yooseph S."/>
            <person name="Lu F."/>
            <person name="Nusskern D.R."/>
            <person name="Shue B.C."/>
            <person name="Zheng X.H."/>
            <person name="Zhong F."/>
            <person name="Delcher A.L."/>
            <person name="Huson D.H."/>
            <person name="Kravitz S.A."/>
            <person name="Mouchard L."/>
            <person name="Reinert K."/>
            <person name="Remington K.A."/>
            <person name="Clark A.G."/>
            <person name="Waterman M.S."/>
            <person name="Eichler E.E."/>
            <person name="Adams M.D."/>
            <person name="Hunkapiller M.W."/>
            <person name="Myers E.W."/>
            <person name="Venter J.C."/>
        </authorList>
    </citation>
    <scope>NUCLEOTIDE SEQUENCE [LARGE SCALE GENOMIC DNA]</scope>
</reference>
<reference key="5">
    <citation type="journal article" date="2004" name="Genome Res.">
        <title>The status, quality, and expansion of the NIH full-length cDNA project: the Mammalian Gene Collection (MGC).</title>
        <authorList>
            <consortium name="The MGC Project Team"/>
        </authorList>
    </citation>
    <scope>NUCLEOTIDE SEQUENCE [LARGE SCALE MRNA] (ISOFORMS 1 AND 6)</scope>
    <scope>VARIANT THR-637</scope>
    <source>
        <tissue>Hippocampus</tissue>
        <tissue>Uterus</tissue>
    </source>
</reference>
<reference key="6">
    <citation type="journal article" date="2007" name="J. Biol. Chem.">
        <title>Three mammalian lipins act as phosphatidate phosphatases with distinct tissue expression patterns.</title>
        <authorList>
            <person name="Donkor J."/>
            <person name="Sariahmetoglu M."/>
            <person name="Dewald J."/>
            <person name="Brindley D.N."/>
            <person name="Reue K."/>
        </authorList>
    </citation>
    <scope>TISSUE SPECIFICITY</scope>
</reference>
<reference key="7">
    <citation type="journal article" date="2008" name="Proc. Natl. Acad. Sci. U.S.A.">
        <title>A quantitative atlas of mitotic phosphorylation.</title>
        <authorList>
            <person name="Dephoure N."/>
            <person name="Zhou C."/>
            <person name="Villen J."/>
            <person name="Beausoleil S.A."/>
            <person name="Bakalarski C.E."/>
            <person name="Elledge S.J."/>
            <person name="Gygi S.P."/>
        </authorList>
    </citation>
    <scope>IDENTIFICATION BY MASS SPECTROMETRY [LARGE SCALE ANALYSIS]</scope>
    <source>
        <tissue>Cervix carcinoma</tissue>
    </source>
</reference>
<reference key="8">
    <citation type="journal article" date="2009" name="Sci. Signal.">
        <title>Quantitative phosphoproteomic analysis of T cell receptor signaling reveals system-wide modulation of protein-protein interactions.</title>
        <authorList>
            <person name="Mayya V."/>
            <person name="Lundgren D.H."/>
            <person name="Hwang S.-I."/>
            <person name="Rezaul K."/>
            <person name="Wu L."/>
            <person name="Eng J.K."/>
            <person name="Rodionov V."/>
            <person name="Han D.K."/>
        </authorList>
    </citation>
    <scope>IDENTIFICATION BY MASS SPECTROMETRY [LARGE SCALE ANALYSIS]</scope>
    <source>
        <tissue>Leukemic T-cell</tissue>
    </source>
</reference>
<reference key="9">
    <citation type="journal article" date="2010" name="J. Biol. Chem.">
        <title>Characterization of the human LPIN1-encoded phosphatidate phosphatase isoforms.</title>
        <authorList>
            <person name="Han G.S."/>
            <person name="Carman G.M."/>
        </authorList>
    </citation>
    <scope>BIOPHYSICOCHEMICAL PROPERTIES (ISOFORMS 1; 3 AND 4)</scope>
    <scope>ACTIVITY REGULATION</scope>
    <scope>COFACTOR</scope>
    <scope>CATALYTIC ACTIVITY</scope>
    <scope>FUNCTION</scope>
</reference>
<reference key="10">
    <citation type="journal article" date="2012" name="J. Biol. Chem.">
        <title>Nuclear envelope phosphatase-regulatory subunit 1 (formerly TMEM188) is the metazoan SPO7 ortholog and functions in the lipin activation pathway.</title>
        <authorList>
            <person name="Han S."/>
            <person name="Bahmanyar S."/>
            <person name="Zhang P."/>
            <person name="Grishin N."/>
            <person name="Oegema K."/>
            <person name="Crooke R."/>
            <person name="Graham M."/>
            <person name="Reue K."/>
            <person name="Dixon J.E."/>
            <person name="Goodman J.M."/>
        </authorList>
    </citation>
    <scope>TISSUE SPECIFICITY</scope>
</reference>
<reference key="11">
    <citation type="journal article" date="2013" name="J. Biol. Chem.">
        <title>Phosphorylation of lipin 1 and charge on the phosphatidic acid head group control its phosphatidic acid phosphatase activity and membrane association.</title>
        <authorList>
            <person name="Eaton J.M."/>
            <person name="Mullins G.R."/>
            <person name="Brindley D.N."/>
            <person name="Harris T.E."/>
        </authorList>
    </citation>
    <scope>FUNCTION</scope>
    <scope>CATALYTIC ACTIVITY</scope>
    <scope>PHOSPHORYLATION</scope>
</reference>
<reference key="12">
    <citation type="journal article" date="2018" name="Nat. Commun.">
        <title>Tip60-mediated lipin 1 acetylation and ER translocation determine triacylglycerol synthesis rate.</title>
        <authorList>
            <person name="Li T.Y."/>
            <person name="Song L."/>
            <person name="Sun Y."/>
            <person name="Li J."/>
            <person name="Yi C."/>
            <person name="Lam S.M."/>
            <person name="Xu D."/>
            <person name="Zhou L."/>
            <person name="Li X."/>
            <person name="Yang Y."/>
            <person name="Zhang C.S."/>
            <person name="Xie C."/>
            <person name="Huang X."/>
            <person name="Shui G."/>
            <person name="Lin S.Y."/>
            <person name="Reue K."/>
            <person name="Lin S.C."/>
        </authorList>
    </citation>
    <scope>FUNCTION</scope>
    <scope>SUBCELLULAR LOCATION</scope>
    <scope>CATALYTIC ACTIVITY</scope>
    <scope>ACETYLATION AT LYS-425 AND LYS-595</scope>
    <scope>MUTAGENESIS OF LYS-425 AND LYS-595</scope>
</reference>
<reference key="13">
    <citation type="journal article" date="2019" name="Nature">
        <title>Lipid signalling drives proteolytic rewiring of mitochondria by YME1L.</title>
        <authorList>
            <person name="MacVicar T."/>
            <person name="Ohba Y."/>
            <person name="Nolte H."/>
            <person name="Mayer F.C."/>
            <person name="Tatsuta T."/>
            <person name="Sprenger H.G."/>
            <person name="Lindner B."/>
            <person name="Zhao Y."/>
            <person name="Li J."/>
            <person name="Bruns C."/>
            <person name="Krueger M."/>
            <person name="Habich M."/>
            <person name="Riemer J."/>
            <person name="Schwarzer R."/>
            <person name="Pasparakis M."/>
            <person name="Henschke S."/>
            <person name="Bruening J.C."/>
            <person name="Zamboni N."/>
            <person name="Langer T."/>
        </authorList>
    </citation>
    <scope>FUNCTION</scope>
    <scope>PHOSPHORYLATION</scope>
</reference>
<reference key="14">
    <citation type="journal article" date="2002" name="J. Hum. Genet.">
        <title>Identification of single-nucleotide polymorphisms in the human LPIN1 gene.</title>
        <authorList>
            <person name="Cao H."/>
            <person name="Hegele R.A."/>
        </authorList>
    </citation>
    <scope>VARIANT SER-610</scope>
</reference>
<reference key="15">
    <citation type="journal article" date="2006" name="Science">
        <title>The consensus coding sequences of human breast and colorectal cancers.</title>
        <authorList>
            <person name="Sjoeblom T."/>
            <person name="Jones S."/>
            <person name="Wood L.D."/>
            <person name="Parsons D.W."/>
            <person name="Lin J."/>
            <person name="Barber T.D."/>
            <person name="Mandelker D."/>
            <person name="Leary R.J."/>
            <person name="Ptak J."/>
            <person name="Silliman N."/>
            <person name="Szabo S."/>
            <person name="Buckhaults P."/>
            <person name="Farrell C."/>
            <person name="Meeh P."/>
            <person name="Markowitz S.D."/>
            <person name="Willis J."/>
            <person name="Dawson D."/>
            <person name="Willson J.K.V."/>
            <person name="Gazdar A.F."/>
            <person name="Hartigan J."/>
            <person name="Wu L."/>
            <person name="Liu C."/>
            <person name="Parmigiani G."/>
            <person name="Park B.H."/>
            <person name="Bachman K.E."/>
            <person name="Papadopoulos N."/>
            <person name="Vogelstein B."/>
            <person name="Kinzler K.W."/>
            <person name="Velculescu V.E."/>
        </authorList>
    </citation>
    <scope>VARIANT [LARGE SCALE ANALYSIS] GLU-56</scope>
</reference>
<reference key="16">
    <citation type="journal article" date="2008" name="Am. J. Hum. Genet.">
        <title>Mutations in LPIN1 cause recurrent acute myoglobinuria in childhood.</title>
        <authorList>
            <person name="Zeharia A."/>
            <person name="Shaag A."/>
            <person name="Houtkooper R.H."/>
            <person name="Hindi T."/>
            <person name="de Lonlay P."/>
            <person name="Erez G."/>
            <person name="Hubert L."/>
            <person name="Saada A."/>
            <person name="de Keyzer Y."/>
            <person name="Eshel G."/>
            <person name="Vaz F.M."/>
            <person name="Pines O."/>
            <person name="Elpeleg O."/>
        </authorList>
    </citation>
    <scope>INVOLVEMENT IN ARARM</scope>
</reference>
<reference key="17">
    <citation type="journal article" date="2008" name="Am. J. Hum. Genet.">
        <authorList>
            <person name="Zeharia A."/>
            <person name="Shaag A."/>
            <person name="Houtkooper R.H."/>
            <person name="Hindi T."/>
            <person name="de Lonlay P."/>
            <person name="Erez G."/>
            <person name="Hubert L."/>
            <person name="Saada A."/>
            <person name="de Keyzer Y."/>
            <person name="Eshel G."/>
            <person name="Vaz F.M."/>
            <person name="Pines O."/>
            <person name="Elpeleg O."/>
        </authorList>
    </citation>
    <scope>ERRATUM OF PUBMED:18817903</scope>
</reference>
<reference key="18">
    <citation type="journal article" date="2022" name="Cell Discov.">
        <title>Loss of function of CMPK2 causes mitochondria deficiency and brain calcification.</title>
        <authorList>
            <person name="Zhao M."/>
            <person name="Su H.Z."/>
            <person name="Zeng Y.H."/>
            <person name="Sun Y."/>
            <person name="Guo X.X."/>
            <person name="Li Y.L."/>
            <person name="Wang C."/>
            <person name="Zhao Z.Y."/>
            <person name="Huang X.J."/>
            <person name="Lin K.J."/>
            <person name="Ye Z.L."/>
            <person name="Lin B.W."/>
            <person name="Hong S."/>
            <person name="Zheng J."/>
            <person name="Liu Y.B."/>
            <person name="Yao X.P."/>
            <person name="Yang D."/>
            <person name="Lu Y.Q."/>
            <person name="Chen H.Z."/>
            <person name="Zuo E."/>
            <person name="Yang G."/>
            <person name="Wang H.T."/>
            <person name="Huang C.W."/>
            <person name="Lin X.H."/>
            <person name="Cen Z."/>
            <person name="Lai L.L."/>
            <person name="Zhang Y.K."/>
            <person name="Li X."/>
            <person name="Lai T."/>
            <person name="Lin J."/>
            <person name="Zuo D.D."/>
            <person name="Lin M.T."/>
            <person name="Liou C.W."/>
            <person name="Kong Q.X."/>
            <person name="Yan C.Z."/>
            <person name="Xiong Z.Q."/>
            <person name="Wang N."/>
            <person name="Luo W."/>
            <person name="Zhao C.P."/>
            <person name="Cheng X."/>
            <person name="Chen W.J."/>
        </authorList>
    </citation>
    <scope>VARIANT ARG-367</scope>
</reference>
<reference key="19">
    <citation type="journal article" date="2024" name="J. Lipid Res.">
        <title>The antidepressant drug sertraline is a novel inhibitor of yeast Pah1 and human lipin 1 phosphatidic acid phosphatases.</title>
        <authorList>
            <person name="Stukey G.J."/>
            <person name="Breuer M.R."/>
            <person name="Burchat N."/>
            <person name="Jog R."/>
            <person name="Schultz K."/>
            <person name="Han G.S."/>
            <person name="Sachs M.S."/>
            <person name="Sampath H."/>
            <person name="Marmorstein R."/>
            <person name="Carman G.M."/>
        </authorList>
    </citation>
    <scope>CATALYTIC ACTIVITY (ISOFORMS 1; 3 AND 4)</scope>
    <scope>ACTIVITY REGULATION (ISOFORMS 1; 3 AND 4)</scope>
</reference>
<accession>Q14693</accession>
<accession>A8MU38</accession>
<accession>B4DET9</accession>
<accession>B4DGS4</accession>
<accession>B4DGZ6</accession>
<accession>B5MC18</accession>
<accession>B7Z858</accession>
<accession>D6W506</accession>
<accession>E7ESE7</accession>
<accession>F5GY24</accession>
<accession>Q53T25</accession>
<sequence length="890" mass="98664">MNYVGQLAGQVFVTVKELYKGLNPATLSGCIDIIVIRQPNGNLQCSPFHVRFGKMGVLRSREKVVDIEINGESVDLHMKLGDNGEAFFVQETDNDQEVIPMHLATSPILSEGASRMECQLKRGSVDRMRGLDPSTPAQVIAPSETPSSSSVVKKRRKRRRKSQLDSLKRDDNMNTSEDEDMFPIEMSSDEAMELLESSRTLPNDIPPFQDDIPEENLSLAVIYPQSASYPNSDREWSPTPSPSGSRPSTPKSDSELVSKSTERTGQKNPEMLWLWGELPQAAKSSSPHKMKESSPLSSRKICDKSHFQAIHSESSDTFSDQSPTLVGGALLDQNKPQTEMQFVNEEDLETLGAAAPLLPMIEELKPPSASVVQTANKTDSPSRKRDKRSRHLGADGVYLDDLTDMDPEVAALYFPKNGDPSGLAKHASDNGARSANQSPQSVGSSGVDSGVESTSDGLRDLPSIAISLCGGLSDHREITKDAFLEQAVSYQQFVDNPAIIDDPNLVVKIGSKYYNWTTAAPLLLAMQAFQKPLPKATVESIMRDKMPKKGGRWWFSWRGRNTTIKEESKPEQCLAGKAHSTGEQPPQLSLATRVKHESSSSDEERAAAKPSNAGHLPLLPNVSYKKTLRLTSEQLKSLKLKNGPNDVVFSVTTQYQGTCRCEGTIYLWNWDDKVIISDIDGTITRSDTLGHILPTLGKDWTHQGIAKLYHKVSQNGYKFLYCSARAIGMADMTRGYLHWVNERGTVLPQGPLLLSPSSLFSALHREVIEKKPEKFKVQCLTDIKNLFFPNTEPFYAAFGNRPADVYSYKQVGVSLNRIFTVNPKGELVQEHAKTNISSYVRLCEVVDHVFPLLKRSHSSDFPCSDTFSNFTFWREPLPPFENQDIHSASA</sequence>